<gene>
    <name type="primary">FGF2</name>
    <name type="synonym">FGFB</name>
</gene>
<feature type="propeptide" id="PRO_0000008932" description="Or 93, or 124, or 125, or 131, or 161">
    <location>
        <begin position="1"/>
        <end position="142"/>
    </location>
</feature>
<feature type="chain" id="PRO_0000008933" description="Fibroblast growth factor 2">
    <location>
        <begin position="143"/>
        <end position="288"/>
    </location>
</feature>
<feature type="region of interest" description="Disordered" evidence="6">
    <location>
        <begin position="1"/>
        <end position="133"/>
    </location>
</feature>
<feature type="region of interest" description="Heparin-binding" evidence="1">
    <location>
        <begin position="261"/>
        <end position="277"/>
    </location>
</feature>
<feature type="short sequence motif" description="Cell attachment site; atypical" evidence="5">
    <location>
        <begin position="179"/>
        <end position="181"/>
    </location>
</feature>
<feature type="short sequence motif" description="Cell attachment site; atypical" evidence="5">
    <location>
        <begin position="221"/>
        <end position="223"/>
    </location>
</feature>
<feature type="compositionally biased region" description="Low complexity" evidence="6">
    <location>
        <begin position="52"/>
        <end position="64"/>
    </location>
</feature>
<feature type="compositionally biased region" description="Basic and acidic residues" evidence="6">
    <location>
        <begin position="68"/>
        <end position="84"/>
    </location>
</feature>
<feature type="compositionally biased region" description="Low complexity" evidence="6">
    <location>
        <begin position="113"/>
        <end position="132"/>
    </location>
</feature>
<feature type="binding site" evidence="1">
    <location>
        <position position="169"/>
    </location>
    <ligand>
        <name>heparin</name>
        <dbReference type="ChEBI" id="CHEBI:28304"/>
    </ligand>
</feature>
<feature type="site" description="Important for interaction with integrin" evidence="18">
    <location>
        <position position="261"/>
    </location>
</feature>
<feature type="site" description="Important for interaction with integrin" evidence="18">
    <location>
        <position position="262"/>
    </location>
</feature>
<feature type="site" description="Important for interaction with integrin" evidence="18">
    <location>
        <position position="267"/>
    </location>
</feature>
<feature type="modified residue" description="Omega-N-methylarginine; alternate" evidence="4">
    <location>
        <position position="108"/>
    </location>
</feature>
<feature type="modified residue" description="Symmetric dimethylarginine; alternate" evidence="4">
    <location>
        <position position="108"/>
    </location>
</feature>
<feature type="modified residue" description="Omega-N-methylarginine; alternate" evidence="4">
    <location>
        <position position="110"/>
    </location>
</feature>
<feature type="modified residue" description="Symmetric dimethylarginine; alternate" evidence="4">
    <location>
        <position position="110"/>
    </location>
</feature>
<feature type="modified residue" description="Omega-N-methylarginine; alternate" evidence="4">
    <location>
        <position position="112"/>
    </location>
</feature>
<feature type="modified residue" description="Symmetric dimethylarginine; alternate" evidence="4">
    <location>
        <position position="112"/>
    </location>
</feature>
<feature type="modified residue" description="Phosphotyrosine; by TEC" evidence="16">
    <location>
        <position position="215"/>
    </location>
</feature>
<feature type="cross-link" description="Glycyl lysine isopeptide (Lys-Gly) (interchain with G-Cter in SUMO1)" evidence="26">
    <location>
        <position position="228"/>
    </location>
</feature>
<feature type="splice variant" id="VSP_037383" description="In isoform 3." evidence="23 24">
    <location>
        <begin position="1"/>
        <end position="133"/>
    </location>
</feature>
<feature type="splice variant" id="VSP_037384" description="In isoform 4." evidence="24">
    <location>
        <begin position="1"/>
        <end position="92"/>
    </location>
</feature>
<feature type="splice variant" id="VSP_038236" description="In isoform 2." evidence="24">
    <location>
        <begin position="1"/>
        <end position="78"/>
    </location>
</feature>
<feature type="splice variant" id="VSP_038237" description="In isoform 2." evidence="24">
    <original>L</original>
    <variation>M</variation>
    <location>
        <position position="79"/>
    </location>
</feature>
<feature type="splice variant" id="VSP_037385" description="In isoform 4." evidence="24">
    <original>L</original>
    <variation>M</variation>
    <location>
        <position position="93"/>
    </location>
</feature>
<feature type="mutagenesis site" description="No effect on integrin binding." evidence="18">
    <original>R</original>
    <variation>E</variation>
    <location>
        <position position="181"/>
    </location>
</feature>
<feature type="mutagenesis site" description="No effect on integrin binding." evidence="18">
    <original>R</original>
    <variation>E</variation>
    <location>
        <position position="186"/>
    </location>
</feature>
<feature type="mutagenesis site" description="No effect on integrin binding." evidence="18">
    <original>K</original>
    <variation>E</variation>
    <location>
        <position position="188"/>
    </location>
</feature>
<feature type="mutagenesis site" description="Abolishes binding to integrin ITGAV:ITGB3 and suppresses FGF2 signaling with loss of ERK1/2 activation and reduced ability to induce DNA synthesis, cell migration and angiogenesis. Acts as a potent antagonist of FGF2-mediated angiogenesis." evidence="18">
    <original>KR</original>
    <variation>EE</variation>
    <location>
        <begin position="261"/>
        <end position="262"/>
    </location>
</feature>
<feature type="mutagenesis site" description="Reduces binding to integrin ITGAV:ITGB3 and suppresses FGF2 signaling with reduced ERK1/2 activation and reduced ability to induce DNA synthesis, cell migration and angiogenesis. Acts as a potent antagonist of FGF2-mediated angiogenesis." evidence="18">
    <original>K</original>
    <variation>E</variation>
    <location>
        <position position="267"/>
    </location>
</feature>
<feature type="sequence conflict" description="In Ref. 10; AAA52448." evidence="25" ref="10">
    <original>G</original>
    <variation>R</variation>
    <location>
        <position position="25"/>
    </location>
</feature>
<feature type="sequence conflict" description="In Ref. 10; AAA52448." evidence="25" ref="10">
    <original>H</original>
    <variation>Q</variation>
    <location>
        <position position="50"/>
    </location>
</feature>
<feature type="sequence conflict" description="In Ref. 10; AAA52448." evidence="25" ref="10">
    <original>A</original>
    <variation>R</variation>
    <location>
        <position position="59"/>
    </location>
</feature>
<feature type="strand" evidence="27">
    <location>
        <begin position="136"/>
        <end position="139"/>
    </location>
</feature>
<feature type="strand" evidence="27">
    <location>
        <begin position="151"/>
        <end position="153"/>
    </location>
</feature>
<feature type="turn" evidence="29">
    <location>
        <begin position="156"/>
        <end position="160"/>
    </location>
</feature>
<feature type="strand" evidence="30">
    <location>
        <begin position="163"/>
        <end position="167"/>
    </location>
</feature>
<feature type="turn" evidence="30">
    <location>
        <begin position="168"/>
        <end position="171"/>
    </location>
</feature>
<feature type="strand" evidence="30">
    <location>
        <begin position="172"/>
        <end position="176"/>
    </location>
</feature>
<feature type="strand" evidence="30">
    <location>
        <begin position="182"/>
        <end position="186"/>
    </location>
</feature>
<feature type="helix" evidence="30">
    <location>
        <begin position="191"/>
        <end position="193"/>
    </location>
</feature>
<feature type="strand" evidence="30">
    <location>
        <begin position="195"/>
        <end position="199"/>
    </location>
</feature>
<feature type="strand" evidence="27">
    <location>
        <begin position="201"/>
        <end position="203"/>
    </location>
</feature>
<feature type="strand" evidence="30">
    <location>
        <begin position="204"/>
        <end position="209"/>
    </location>
</feature>
<feature type="turn" evidence="30">
    <location>
        <begin position="210"/>
        <end position="213"/>
    </location>
</feature>
<feature type="strand" evidence="30">
    <location>
        <begin position="214"/>
        <end position="218"/>
    </location>
</feature>
<feature type="strand" evidence="27">
    <location>
        <begin position="220"/>
        <end position="222"/>
    </location>
</feature>
<feature type="strand" evidence="30">
    <location>
        <begin position="224"/>
        <end position="229"/>
    </location>
</feature>
<feature type="helix" evidence="30">
    <location>
        <begin position="232"/>
        <end position="234"/>
    </location>
</feature>
<feature type="strand" evidence="30">
    <location>
        <begin position="236"/>
        <end position="240"/>
    </location>
</feature>
<feature type="helix" evidence="28">
    <location>
        <begin position="242"/>
        <end position="244"/>
    </location>
</feature>
<feature type="strand" evidence="30">
    <location>
        <begin position="246"/>
        <end position="253"/>
    </location>
</feature>
<feature type="strand" evidence="30">
    <location>
        <begin position="264"/>
        <end position="266"/>
    </location>
</feature>
<feature type="helix" evidence="30">
    <location>
        <begin position="269"/>
        <end position="271"/>
    </location>
</feature>
<feature type="helix" evidence="30">
    <location>
        <begin position="277"/>
        <end position="279"/>
    </location>
</feature>
<feature type="strand" evidence="30">
    <location>
        <begin position="281"/>
        <end position="285"/>
    </location>
</feature>
<protein>
    <recommendedName>
        <fullName>Fibroblast growth factor 2</fullName>
        <shortName>FGF-2</shortName>
    </recommendedName>
    <alternativeName>
        <fullName>Basic fibroblast growth factor</fullName>
        <shortName>bFGF</shortName>
    </alternativeName>
    <alternativeName>
        <fullName>Heparin-binding growth factor 2</fullName>
        <shortName>HBGF-2</shortName>
    </alternativeName>
</protein>
<name>FGF2_HUMAN</name>
<evidence type="ECO:0000250" key="1"/>
<evidence type="ECO:0000250" key="2">
    <source>
        <dbReference type="UniProtKB" id="P13109"/>
    </source>
</evidence>
<evidence type="ECO:0000250" key="3">
    <source>
        <dbReference type="UniProtKB" id="P15655"/>
    </source>
</evidence>
<evidence type="ECO:0000250" key="4">
    <source>
        <dbReference type="UniProtKB" id="Q60487"/>
    </source>
</evidence>
<evidence type="ECO:0000255" key="5"/>
<evidence type="ECO:0000256" key="6">
    <source>
        <dbReference type="SAM" id="MobiDB-lite"/>
    </source>
</evidence>
<evidence type="ECO:0000269" key="7">
    <source>
    </source>
</evidence>
<evidence type="ECO:0000269" key="8">
    <source>
    </source>
</evidence>
<evidence type="ECO:0000269" key="9">
    <source>
    </source>
</evidence>
<evidence type="ECO:0000269" key="10">
    <source>
    </source>
</evidence>
<evidence type="ECO:0000269" key="11">
    <source>
    </source>
</evidence>
<evidence type="ECO:0000269" key="12">
    <source>
    </source>
</evidence>
<evidence type="ECO:0000269" key="13">
    <source>
    </source>
</evidence>
<evidence type="ECO:0000269" key="14">
    <source>
    </source>
</evidence>
<evidence type="ECO:0000269" key="15">
    <source>
    </source>
</evidence>
<evidence type="ECO:0000269" key="16">
    <source>
    </source>
</evidence>
<evidence type="ECO:0000269" key="17">
    <source>
    </source>
</evidence>
<evidence type="ECO:0000269" key="18">
    <source>
    </source>
</evidence>
<evidence type="ECO:0000269" key="19">
    <source>
    </source>
</evidence>
<evidence type="ECO:0000269" key="20">
    <source>
    </source>
</evidence>
<evidence type="ECO:0000269" key="21">
    <source>
    </source>
</evidence>
<evidence type="ECO:0000269" key="22">
    <source>
    </source>
</evidence>
<evidence type="ECO:0000303" key="23">
    <source>
    </source>
</evidence>
<evidence type="ECO:0000303" key="24">
    <source>
    </source>
</evidence>
<evidence type="ECO:0000305" key="25"/>
<evidence type="ECO:0007744" key="26">
    <source>
    </source>
</evidence>
<evidence type="ECO:0007829" key="27">
    <source>
        <dbReference type="PDB" id="1BLA"/>
    </source>
</evidence>
<evidence type="ECO:0007829" key="28">
    <source>
        <dbReference type="PDB" id="2FGF"/>
    </source>
</evidence>
<evidence type="ECO:0007829" key="29">
    <source>
        <dbReference type="PDB" id="8HU7"/>
    </source>
</evidence>
<evidence type="ECO:0007829" key="30">
    <source>
        <dbReference type="PDB" id="8OM6"/>
    </source>
</evidence>
<proteinExistence type="evidence at protein level"/>
<accession>P09038</accession>
<accession>A4LBB8</accession>
<accession>O00527</accession>
<accession>P78443</accession>
<accession>Q16443</accession>
<accession>Q5PY50</accession>
<accession>Q7KZ11</accession>
<accession>Q7KZ72</accession>
<accession>Q9UC54</accession>
<accession>Q9UCS5</accession>
<accession>Q9UCS6</accession>
<dbReference type="EMBL" id="X04431">
    <property type="protein sequence ID" value="CAA28027.1"/>
    <property type="status" value="ALT_SEQ"/>
    <property type="molecule type" value="Genomic_DNA"/>
</dbReference>
<dbReference type="EMBL" id="X04432">
    <property type="protein sequence ID" value="CAA28028.1"/>
    <property type="molecule type" value="Genomic_DNA"/>
</dbReference>
<dbReference type="EMBL" id="X04433">
    <property type="protein sequence ID" value="CAA28029.1"/>
    <property type="molecule type" value="Genomic_DNA"/>
</dbReference>
<dbReference type="EMBL" id="J04513">
    <property type="protein sequence ID" value="AAA52531.1"/>
    <property type="molecule type" value="mRNA"/>
</dbReference>
<dbReference type="EMBL" id="J04513">
    <property type="protein sequence ID" value="AAA52532.1"/>
    <property type="molecule type" value="mRNA"/>
</dbReference>
<dbReference type="EMBL" id="J04513">
    <property type="protein sequence ID" value="AAA52533.1"/>
    <property type="molecule type" value="mRNA"/>
</dbReference>
<dbReference type="EMBL" id="AB451321">
    <property type="protein sequence ID" value="BAG70135.1"/>
    <property type="molecule type" value="mRNA"/>
</dbReference>
<dbReference type="EMBL" id="AB451450">
    <property type="protein sequence ID" value="BAG70264.1"/>
    <property type="molecule type" value="mRNA"/>
</dbReference>
<dbReference type="EMBL" id="EF506888">
    <property type="protein sequence ID" value="ABO43041.1"/>
    <property type="status" value="ALT_SEQ"/>
    <property type="molecule type" value="Genomic_DNA"/>
</dbReference>
<dbReference type="EMBL" id="AC021205">
    <property type="status" value="NOT_ANNOTATED_CDS"/>
    <property type="molecule type" value="Genomic_DNA"/>
</dbReference>
<dbReference type="EMBL" id="CH471056">
    <property type="protein sequence ID" value="EAX05222.1"/>
    <property type="status" value="ALT_SEQ"/>
    <property type="molecule type" value="Genomic_DNA"/>
</dbReference>
<dbReference type="EMBL" id="S81809">
    <property type="protein sequence ID" value="AAB21432.2"/>
    <property type="status" value="ALT_SEQ"/>
    <property type="molecule type" value="Genomic_DNA"/>
</dbReference>
<dbReference type="EMBL" id="Y13468">
    <property type="protein sequence ID" value="CAA73868.1"/>
    <property type="status" value="ALT_SEQ"/>
    <property type="molecule type" value="Genomic_DNA"/>
</dbReference>
<dbReference type="EMBL" id="M27968">
    <property type="protein sequence ID" value="AAA52448.1"/>
    <property type="status" value="ALT_FRAME"/>
    <property type="molecule type" value="mRNA"/>
</dbReference>
<dbReference type="EMBL" id="M17599">
    <property type="protein sequence ID" value="AAA52534.1"/>
    <property type="molecule type" value="mRNA"/>
</dbReference>
<dbReference type="EMBL" id="AY820133">
    <property type="protein sequence ID" value="AAV70487.1"/>
    <property type="molecule type" value="mRNA"/>
</dbReference>
<dbReference type="EMBL" id="S47380">
    <property type="protein sequence ID" value="AAD13853.1"/>
    <property type="molecule type" value="mRNA"/>
</dbReference>
<dbReference type="CCDS" id="CCDS34059.1">
    <molecule id="P09038-4"/>
</dbReference>
<dbReference type="CCDS" id="CCDS93618.1">
    <molecule id="P09038-2"/>
</dbReference>
<dbReference type="PIR" id="A32398">
    <property type="entry name" value="A32398"/>
</dbReference>
<dbReference type="RefSeq" id="NP_001348594.1">
    <molecule id="P09038-2"/>
    <property type="nucleotide sequence ID" value="NM_001361665.2"/>
</dbReference>
<dbReference type="RefSeq" id="NP_001997.5">
    <molecule id="P09038-4"/>
    <property type="nucleotide sequence ID" value="NM_002006.4"/>
</dbReference>
<dbReference type="PDB" id="1BAS">
    <property type="method" value="X-ray"/>
    <property type="resolution" value="1.90 A"/>
    <property type="chains" value="A=135-288"/>
</dbReference>
<dbReference type="PDB" id="1BFB">
    <property type="method" value="X-ray"/>
    <property type="resolution" value="1.90 A"/>
    <property type="chains" value="A=142-288"/>
</dbReference>
<dbReference type="PDB" id="1BFC">
    <property type="method" value="X-ray"/>
    <property type="resolution" value="2.20 A"/>
    <property type="chains" value="A=142-288"/>
</dbReference>
<dbReference type="PDB" id="1BFF">
    <property type="method" value="X-ray"/>
    <property type="resolution" value="2.00 A"/>
    <property type="chains" value="A=160-288"/>
</dbReference>
<dbReference type="PDB" id="1BFG">
    <property type="method" value="X-ray"/>
    <property type="resolution" value="1.60 A"/>
    <property type="chains" value="A=143-288"/>
</dbReference>
<dbReference type="PDB" id="1BLA">
    <property type="method" value="NMR"/>
    <property type="chains" value="A=134-288"/>
</dbReference>
<dbReference type="PDB" id="1BLD">
    <property type="method" value="NMR"/>
    <property type="chains" value="A=134-288"/>
</dbReference>
<dbReference type="PDB" id="1CVS">
    <property type="method" value="X-ray"/>
    <property type="resolution" value="2.80 A"/>
    <property type="chains" value="A/B=157-288"/>
</dbReference>
<dbReference type="PDB" id="1EV2">
    <property type="method" value="X-ray"/>
    <property type="resolution" value="2.20 A"/>
    <property type="chains" value="A/B/C/D=157-288"/>
</dbReference>
<dbReference type="PDB" id="1FGA">
    <property type="method" value="X-ray"/>
    <property type="resolution" value="2.20 A"/>
    <property type="chains" value="A=143-288"/>
</dbReference>
<dbReference type="PDB" id="1FQ9">
    <property type="method" value="X-ray"/>
    <property type="resolution" value="3.00 A"/>
    <property type="chains" value="A/B=157-288"/>
</dbReference>
<dbReference type="PDB" id="1II4">
    <property type="method" value="X-ray"/>
    <property type="resolution" value="2.70 A"/>
    <property type="chains" value="A/B/C/D=134-288"/>
</dbReference>
<dbReference type="PDB" id="1IIL">
    <property type="method" value="X-ray"/>
    <property type="resolution" value="2.30 A"/>
    <property type="chains" value="A/B/C/D=134-288"/>
</dbReference>
<dbReference type="PDB" id="2BFH">
    <property type="method" value="X-ray"/>
    <property type="resolution" value="2.50 A"/>
    <property type="chains" value="A=161-288"/>
</dbReference>
<dbReference type="PDB" id="2FGF">
    <property type="method" value="X-ray"/>
    <property type="resolution" value="1.77 A"/>
    <property type="chains" value="A=143-288"/>
</dbReference>
<dbReference type="PDB" id="2M49">
    <property type="method" value="NMR"/>
    <property type="chains" value="A/C=161-286"/>
</dbReference>
<dbReference type="PDB" id="4FGF">
    <property type="method" value="X-ray"/>
    <property type="resolution" value="1.60 A"/>
    <property type="chains" value="A=143-288"/>
</dbReference>
<dbReference type="PDB" id="4OEE">
    <property type="method" value="X-ray"/>
    <property type="resolution" value="1.50 A"/>
    <property type="chains" value="A=134-288"/>
</dbReference>
<dbReference type="PDB" id="4OEF">
    <property type="method" value="X-ray"/>
    <property type="resolution" value="1.80 A"/>
    <property type="chains" value="A=134-288"/>
</dbReference>
<dbReference type="PDB" id="4OEG">
    <property type="method" value="X-ray"/>
    <property type="resolution" value="1.60 A"/>
    <property type="chains" value="A=134-288"/>
</dbReference>
<dbReference type="PDB" id="5X1O">
    <property type="method" value="X-ray"/>
    <property type="resolution" value="1.90 A"/>
    <property type="chains" value="A/B=143-288"/>
</dbReference>
<dbReference type="PDB" id="6L4O">
    <property type="method" value="X-ray"/>
    <property type="resolution" value="2.60 A"/>
    <property type="chains" value="B=135-288"/>
</dbReference>
<dbReference type="PDB" id="8HU7">
    <property type="method" value="X-ray"/>
    <property type="resolution" value="1.40 A"/>
    <property type="chains" value="A=142-288"/>
</dbReference>
<dbReference type="PDB" id="8HUE">
    <property type="method" value="X-ray"/>
    <property type="resolution" value="1.48 A"/>
    <property type="chains" value="A/B/C=142-288"/>
</dbReference>
<dbReference type="PDB" id="8OM6">
    <property type="method" value="X-ray"/>
    <property type="resolution" value="1.31 A"/>
    <property type="chains" value="A=134-288"/>
</dbReference>
<dbReference type="PDBsum" id="1BAS"/>
<dbReference type="PDBsum" id="1BFB"/>
<dbReference type="PDBsum" id="1BFC"/>
<dbReference type="PDBsum" id="1BFF"/>
<dbReference type="PDBsum" id="1BFG"/>
<dbReference type="PDBsum" id="1BLA"/>
<dbReference type="PDBsum" id="1BLD"/>
<dbReference type="PDBsum" id="1CVS"/>
<dbReference type="PDBsum" id="1EV2"/>
<dbReference type="PDBsum" id="1FGA"/>
<dbReference type="PDBsum" id="1FQ9"/>
<dbReference type="PDBsum" id="1II4"/>
<dbReference type="PDBsum" id="1IIL"/>
<dbReference type="PDBsum" id="2BFH"/>
<dbReference type="PDBsum" id="2FGF"/>
<dbReference type="PDBsum" id="2M49"/>
<dbReference type="PDBsum" id="4FGF"/>
<dbReference type="PDBsum" id="4OEE"/>
<dbReference type="PDBsum" id="4OEF"/>
<dbReference type="PDBsum" id="4OEG"/>
<dbReference type="PDBsum" id="5X1O"/>
<dbReference type="PDBsum" id="6L4O"/>
<dbReference type="PDBsum" id="8HU7"/>
<dbReference type="PDBsum" id="8HUE"/>
<dbReference type="PDBsum" id="8OM6"/>
<dbReference type="BMRB" id="P09038"/>
<dbReference type="SMR" id="P09038"/>
<dbReference type="BioGRID" id="108538">
    <property type="interactions" value="47"/>
</dbReference>
<dbReference type="CORUM" id="P09038"/>
<dbReference type="DIP" id="DIP-4012N"/>
<dbReference type="FunCoup" id="P09038">
    <property type="interactions" value="1193"/>
</dbReference>
<dbReference type="IntAct" id="P09038">
    <property type="interactions" value="24"/>
</dbReference>
<dbReference type="MINT" id="P09038"/>
<dbReference type="STRING" id="9606.ENSP00000264498"/>
<dbReference type="BindingDB" id="P09038"/>
<dbReference type="ChEMBL" id="CHEMBL3107"/>
<dbReference type="DrugBank" id="DB03981">
    <property type="generic name" value="1,4-Dideoxy-5-Dehydro-O2-Sulfo-Glucuronic Acid"/>
</dbReference>
<dbReference type="DrugBank" id="DB03935">
    <property type="generic name" value="1,4-Dideoxy-O2-Sulfo-Glucuronic Acid"/>
</dbReference>
<dbReference type="DrugBank" id="DB05434">
    <property type="generic name" value="ABT-510"/>
</dbReference>
<dbReference type="DrugBank" id="DB01109">
    <property type="generic name" value="Heparin"/>
</dbReference>
<dbReference type="DrugBank" id="DB03345">
    <property type="generic name" value="Mercaptoethanol"/>
</dbReference>
<dbReference type="DrugBank" id="DB03959">
    <property type="generic name" value="N,O6-Disulfo-Glucosamine"/>
</dbReference>
<dbReference type="DrugBank" id="DB00686">
    <property type="generic name" value="Pentosan polysulfate"/>
</dbReference>
<dbReference type="DrugBank" id="DB06461">
    <property type="generic name" value="Squalamine"/>
</dbReference>
<dbReference type="DrugBank" id="DB00364">
    <property type="generic name" value="Sucralfate"/>
</dbReference>
<dbReference type="MoonProt" id="P09038"/>
<dbReference type="TCDB" id="1.A.108.1.1">
    <property type="family name" value="the fibroblast growth factor 2 (fgf2) family"/>
</dbReference>
<dbReference type="GlyGen" id="P09038">
    <property type="glycosylation" value="1 site, 1 O-linked glycan (1 site)"/>
</dbReference>
<dbReference type="iPTMnet" id="P09038"/>
<dbReference type="PhosphoSitePlus" id="P09038"/>
<dbReference type="BioMuta" id="FGF2"/>
<dbReference type="DMDM" id="261260095"/>
<dbReference type="jPOST" id="P09038"/>
<dbReference type="MassIVE" id="P09038"/>
<dbReference type="PaxDb" id="9606-ENSP00000264498"/>
<dbReference type="PeptideAtlas" id="P09038"/>
<dbReference type="ProteomicsDB" id="52187">
    <molecule id="P09038-4"/>
</dbReference>
<dbReference type="ProteomicsDB" id="52188">
    <molecule id="P09038-1"/>
</dbReference>
<dbReference type="ProteomicsDB" id="52189">
    <molecule id="P09038-2"/>
</dbReference>
<dbReference type="ProteomicsDB" id="52190">
    <molecule id="P09038-3"/>
</dbReference>
<dbReference type="Pumba" id="P09038"/>
<dbReference type="ABCD" id="P09038">
    <property type="antibodies" value="1 sequenced antibody"/>
</dbReference>
<dbReference type="Antibodypedia" id="3433">
    <property type="antibodies" value="1266 antibodies from 48 providers"/>
</dbReference>
<dbReference type="DNASU" id="2247"/>
<dbReference type="Ensembl" id="ENST00000264498.9">
    <molecule id="P09038-4"/>
    <property type="protein sequence ID" value="ENSP00000264498.4"/>
    <property type="gene ID" value="ENSG00000138685.18"/>
</dbReference>
<dbReference type="Ensembl" id="ENST00000608478.1">
    <molecule id="P09038-2"/>
    <property type="protein sequence ID" value="ENSP00000477134.1"/>
    <property type="gene ID" value="ENSG00000138685.18"/>
</dbReference>
<dbReference type="Ensembl" id="ENST00000644866.2">
    <molecule id="P09038-2"/>
    <property type="protein sequence ID" value="ENSP00000494222.1"/>
    <property type="gene ID" value="ENSG00000138685.18"/>
</dbReference>
<dbReference type="GeneID" id="2247"/>
<dbReference type="KEGG" id="hsa:2247"/>
<dbReference type="MANE-Select" id="ENST00000644866.2">
    <molecule id="P09038-2"/>
    <property type="protein sequence ID" value="ENSP00000494222.1"/>
    <property type="RefSeq nucleotide sequence ID" value="NM_001361665.2"/>
    <property type="RefSeq protein sequence ID" value="NP_001348594.1"/>
</dbReference>
<dbReference type="UCSC" id="uc062zki.1">
    <molecule id="P09038-4"/>
    <property type="organism name" value="human"/>
</dbReference>
<dbReference type="AGR" id="HGNC:3676"/>
<dbReference type="CTD" id="2247"/>
<dbReference type="DisGeNET" id="2247"/>
<dbReference type="GeneCards" id="FGF2"/>
<dbReference type="HGNC" id="HGNC:3676">
    <property type="gene designation" value="FGF2"/>
</dbReference>
<dbReference type="HPA" id="ENSG00000138685">
    <property type="expression patterns" value="Low tissue specificity"/>
</dbReference>
<dbReference type="MalaCards" id="FGF2"/>
<dbReference type="MIM" id="134920">
    <property type="type" value="gene"/>
</dbReference>
<dbReference type="neXtProt" id="NX_P09038"/>
<dbReference type="OpenTargets" id="ENSG00000138685"/>
<dbReference type="PharmGKB" id="PA28115"/>
<dbReference type="VEuPathDB" id="HostDB:ENSG00000138685"/>
<dbReference type="eggNOG" id="KOG3885">
    <property type="taxonomic scope" value="Eukaryota"/>
</dbReference>
<dbReference type="GeneTree" id="ENSGT00940000161583"/>
<dbReference type="HOGENOM" id="CLU_081609_5_1_1"/>
<dbReference type="InParanoid" id="P09038"/>
<dbReference type="OrthoDB" id="5987799at2759"/>
<dbReference type="PAN-GO" id="P09038">
    <property type="GO annotations" value="15 GO annotations based on evolutionary models"/>
</dbReference>
<dbReference type="PhylomeDB" id="P09038"/>
<dbReference type="TreeFam" id="TF317805"/>
<dbReference type="PathwayCommons" id="P09038"/>
<dbReference type="Reactome" id="R-HSA-109704">
    <property type="pathway name" value="PI3K Cascade"/>
</dbReference>
<dbReference type="Reactome" id="R-HSA-1257604">
    <property type="pathway name" value="PIP3 activates AKT signaling"/>
</dbReference>
<dbReference type="Reactome" id="R-HSA-1839122">
    <property type="pathway name" value="Signaling by activated point mutants of FGFR1"/>
</dbReference>
<dbReference type="Reactome" id="R-HSA-1839130">
    <property type="pathway name" value="Signaling by activated point mutants of FGFR3"/>
</dbReference>
<dbReference type="Reactome" id="R-HSA-190322">
    <property type="pathway name" value="FGFR4 ligand binding and activation"/>
</dbReference>
<dbReference type="Reactome" id="R-HSA-190370">
    <property type="pathway name" value="FGFR1b ligand binding and activation"/>
</dbReference>
<dbReference type="Reactome" id="R-HSA-190372">
    <property type="pathway name" value="FGFR3c ligand binding and activation"/>
</dbReference>
<dbReference type="Reactome" id="R-HSA-190373">
    <property type="pathway name" value="FGFR1c ligand binding and activation"/>
</dbReference>
<dbReference type="Reactome" id="R-HSA-190375">
    <property type="pathway name" value="FGFR2c ligand binding and activation"/>
</dbReference>
<dbReference type="Reactome" id="R-HSA-190377">
    <property type="pathway name" value="FGFR2b ligand binding and activation"/>
</dbReference>
<dbReference type="Reactome" id="R-HSA-2033519">
    <property type="pathway name" value="Activated point mutants of FGFR2"/>
</dbReference>
<dbReference type="Reactome" id="R-HSA-2219530">
    <property type="pathway name" value="Constitutive Signaling by Aberrant PI3K in Cancer"/>
</dbReference>
<dbReference type="Reactome" id="R-HSA-2892247">
    <property type="pathway name" value="POU5F1 (OCT4), SOX2, NANOG activate genes related to proliferation"/>
</dbReference>
<dbReference type="Reactome" id="R-HSA-3000170">
    <property type="pathway name" value="Syndecan interactions"/>
</dbReference>
<dbReference type="Reactome" id="R-HSA-3000171">
    <property type="pathway name" value="Non-integrin membrane-ECM interactions"/>
</dbReference>
<dbReference type="Reactome" id="R-HSA-5654219">
    <property type="pathway name" value="Phospholipase C-mediated cascade: FGFR1"/>
</dbReference>
<dbReference type="Reactome" id="R-HSA-5654221">
    <property type="pathway name" value="Phospholipase C-mediated cascade, FGFR2"/>
</dbReference>
<dbReference type="Reactome" id="R-HSA-5654227">
    <property type="pathway name" value="Phospholipase C-mediated cascade, FGFR3"/>
</dbReference>
<dbReference type="Reactome" id="R-HSA-5654228">
    <property type="pathway name" value="Phospholipase C-mediated cascade, FGFR4"/>
</dbReference>
<dbReference type="Reactome" id="R-HSA-5654687">
    <property type="pathway name" value="Downstream signaling of activated FGFR1"/>
</dbReference>
<dbReference type="Reactome" id="R-HSA-5654688">
    <property type="pathway name" value="SHC-mediated cascade:FGFR1"/>
</dbReference>
<dbReference type="Reactome" id="R-HSA-5654689">
    <property type="pathway name" value="PI-3K cascade:FGFR1"/>
</dbReference>
<dbReference type="Reactome" id="R-HSA-5654693">
    <property type="pathway name" value="FRS-mediated FGFR1 signaling"/>
</dbReference>
<dbReference type="Reactome" id="R-HSA-5654695">
    <property type="pathway name" value="PI-3K cascade:FGFR2"/>
</dbReference>
<dbReference type="Reactome" id="R-HSA-5654699">
    <property type="pathway name" value="SHC-mediated cascade:FGFR2"/>
</dbReference>
<dbReference type="Reactome" id="R-HSA-5654700">
    <property type="pathway name" value="FRS-mediated FGFR2 signaling"/>
</dbReference>
<dbReference type="Reactome" id="R-HSA-5654704">
    <property type="pathway name" value="SHC-mediated cascade:FGFR3"/>
</dbReference>
<dbReference type="Reactome" id="R-HSA-5654706">
    <property type="pathway name" value="FRS-mediated FGFR3 signaling"/>
</dbReference>
<dbReference type="Reactome" id="R-HSA-5654710">
    <property type="pathway name" value="PI-3K cascade:FGFR3"/>
</dbReference>
<dbReference type="Reactome" id="R-HSA-5654712">
    <property type="pathway name" value="FRS-mediated FGFR4 signaling"/>
</dbReference>
<dbReference type="Reactome" id="R-HSA-5654719">
    <property type="pathway name" value="SHC-mediated cascade:FGFR4"/>
</dbReference>
<dbReference type="Reactome" id="R-HSA-5654720">
    <property type="pathway name" value="PI-3K cascade:FGFR4"/>
</dbReference>
<dbReference type="Reactome" id="R-HSA-5654726">
    <property type="pathway name" value="Negative regulation of FGFR1 signaling"/>
</dbReference>
<dbReference type="Reactome" id="R-HSA-5654727">
    <property type="pathway name" value="Negative regulation of FGFR2 signaling"/>
</dbReference>
<dbReference type="Reactome" id="R-HSA-5654732">
    <property type="pathway name" value="Negative regulation of FGFR3 signaling"/>
</dbReference>
<dbReference type="Reactome" id="R-HSA-5654733">
    <property type="pathway name" value="Negative regulation of FGFR4 signaling"/>
</dbReference>
<dbReference type="Reactome" id="R-HSA-5655253">
    <property type="pathway name" value="Signaling by FGFR2 in disease"/>
</dbReference>
<dbReference type="Reactome" id="R-HSA-5655302">
    <property type="pathway name" value="Signaling by FGFR1 in disease"/>
</dbReference>
<dbReference type="Reactome" id="R-HSA-5655332">
    <property type="pathway name" value="Signaling by FGFR3 in disease"/>
</dbReference>
<dbReference type="Reactome" id="R-HSA-5658623">
    <property type="pathway name" value="FGFRL1 modulation of FGFR1 signaling"/>
</dbReference>
<dbReference type="Reactome" id="R-HSA-5673001">
    <property type="pathway name" value="RAF/MAP kinase cascade"/>
</dbReference>
<dbReference type="Reactome" id="R-HSA-6785807">
    <property type="pathway name" value="Interleukin-4 and Interleukin-13 signaling"/>
</dbReference>
<dbReference type="Reactome" id="R-HSA-6811558">
    <property type="pathway name" value="PI5P, PP2A and IER3 Regulate PI3K/AKT Signaling"/>
</dbReference>
<dbReference type="Reactome" id="R-HSA-8851708">
    <property type="pathway name" value="Signaling by FGFR2 IIIa TM"/>
</dbReference>
<dbReference type="Reactome" id="R-HSA-9761174">
    <property type="pathway name" value="Formation of intermediate mesoderm"/>
</dbReference>
<dbReference type="Reactome" id="R-HSA-9830364">
    <property type="pathway name" value="Formation of the nephric duct"/>
</dbReference>
<dbReference type="Reactome" id="R-HSA-9839397">
    <property type="pathway name" value="TGFBR3 regulates FGF2 signaling"/>
</dbReference>
<dbReference type="Reactome" id="R-HSA-9925561">
    <property type="pathway name" value="Developmental Lineage of Pancreatic Acinar Cells"/>
</dbReference>
<dbReference type="SignaLink" id="P09038"/>
<dbReference type="SIGNOR" id="P09038"/>
<dbReference type="BioGRID-ORCS" id="2247">
    <property type="hits" value="9 hits in 1130 CRISPR screens"/>
</dbReference>
<dbReference type="CD-CODE" id="FB4E32DD">
    <property type="entry name" value="Presynaptic clusters and postsynaptic densities"/>
</dbReference>
<dbReference type="EvolutionaryTrace" id="P09038"/>
<dbReference type="GeneWiki" id="Basic_fibroblast_growth_factor"/>
<dbReference type="GenomeRNAi" id="2247"/>
<dbReference type="Pharos" id="P09038">
    <property type="development level" value="Tchem"/>
</dbReference>
<dbReference type="PRO" id="PR:P09038"/>
<dbReference type="Proteomes" id="UP000005640">
    <property type="component" value="Chromosome 4"/>
</dbReference>
<dbReference type="RNAct" id="P09038">
    <property type="molecule type" value="protein"/>
</dbReference>
<dbReference type="Bgee" id="ENSG00000138685">
    <property type="expression patterns" value="Expressed in cartilage tissue and 153 other cell types or tissues"/>
</dbReference>
<dbReference type="ExpressionAtlas" id="P09038">
    <property type="expression patterns" value="baseline and differential"/>
</dbReference>
<dbReference type="GO" id="GO:0005737">
    <property type="term" value="C:cytoplasm"/>
    <property type="evidence" value="ECO:0000318"/>
    <property type="project" value="GO_Central"/>
</dbReference>
<dbReference type="GO" id="GO:0005576">
    <property type="term" value="C:extracellular region"/>
    <property type="evidence" value="ECO:0000304"/>
    <property type="project" value="Reactome"/>
</dbReference>
<dbReference type="GO" id="GO:0005615">
    <property type="term" value="C:extracellular space"/>
    <property type="evidence" value="ECO:0000314"/>
    <property type="project" value="MGI"/>
</dbReference>
<dbReference type="GO" id="GO:0005634">
    <property type="term" value="C:nucleus"/>
    <property type="evidence" value="ECO:0000318"/>
    <property type="project" value="GO_Central"/>
</dbReference>
<dbReference type="GO" id="GO:0042056">
    <property type="term" value="F:chemoattractant activity"/>
    <property type="evidence" value="ECO:0000314"/>
    <property type="project" value="BHF-UCL"/>
</dbReference>
<dbReference type="GO" id="GO:0019956">
    <property type="term" value="F:chemokine binding"/>
    <property type="evidence" value="ECO:0000353"/>
    <property type="project" value="BHF-UCL"/>
</dbReference>
<dbReference type="GO" id="GO:0005125">
    <property type="term" value="F:cytokine activity"/>
    <property type="evidence" value="ECO:0000314"/>
    <property type="project" value="BHF-UCL"/>
</dbReference>
<dbReference type="GO" id="GO:0005104">
    <property type="term" value="F:fibroblast growth factor receptor binding"/>
    <property type="evidence" value="ECO:0000353"/>
    <property type="project" value="MGI"/>
</dbReference>
<dbReference type="GO" id="GO:0008083">
    <property type="term" value="F:growth factor activity"/>
    <property type="evidence" value="ECO:0000314"/>
    <property type="project" value="BHF-UCL"/>
</dbReference>
<dbReference type="GO" id="GO:0008201">
    <property type="term" value="F:heparin binding"/>
    <property type="evidence" value="ECO:0007669"/>
    <property type="project" value="UniProtKB-KW"/>
</dbReference>
<dbReference type="GO" id="GO:0062072">
    <property type="term" value="F:histone H3K9me2/3 reader activity"/>
    <property type="evidence" value="ECO:0007669"/>
    <property type="project" value="Ensembl"/>
</dbReference>
<dbReference type="GO" id="GO:0042802">
    <property type="term" value="F:identical protein binding"/>
    <property type="evidence" value="ECO:0000353"/>
    <property type="project" value="BHF-UCL"/>
</dbReference>
<dbReference type="GO" id="GO:0005178">
    <property type="term" value="F:integrin binding"/>
    <property type="evidence" value="ECO:0000314"/>
    <property type="project" value="UniProtKB"/>
</dbReference>
<dbReference type="GO" id="GO:0090722">
    <property type="term" value="F:receptor-receptor interaction"/>
    <property type="evidence" value="ECO:0000314"/>
    <property type="project" value="ParkinsonsUK-UCL"/>
</dbReference>
<dbReference type="GO" id="GO:0060978">
    <property type="term" value="P:angiogenesis involved in coronary vascular morphogenesis"/>
    <property type="evidence" value="ECO:0007669"/>
    <property type="project" value="Ensembl"/>
</dbReference>
<dbReference type="GO" id="GO:0009887">
    <property type="term" value="P:animal organ morphogenesis"/>
    <property type="evidence" value="ECO:0000304"/>
    <property type="project" value="ProtInc"/>
</dbReference>
<dbReference type="GO" id="GO:0048149">
    <property type="term" value="P:behavioral response to ethanol"/>
    <property type="evidence" value="ECO:0007669"/>
    <property type="project" value="Ensembl"/>
</dbReference>
<dbReference type="GO" id="GO:0001658">
    <property type="term" value="P:branching involved in ureteric bud morphogenesis"/>
    <property type="evidence" value="ECO:0000314"/>
    <property type="project" value="UniProtKB"/>
</dbReference>
<dbReference type="GO" id="GO:0060070">
    <property type="term" value="P:canonical Wnt signaling pathway"/>
    <property type="evidence" value="ECO:0007669"/>
    <property type="project" value="Ensembl"/>
</dbReference>
<dbReference type="GO" id="GO:0002042">
    <property type="term" value="P:cell migration involved in sprouting angiogenesis"/>
    <property type="evidence" value="ECO:0000314"/>
    <property type="project" value="BHF-UCL"/>
</dbReference>
<dbReference type="GO" id="GO:0071260">
    <property type="term" value="P:cellular response to mechanical stimulus"/>
    <property type="evidence" value="ECO:0007669"/>
    <property type="project" value="Ensembl"/>
</dbReference>
<dbReference type="GO" id="GO:0021930">
    <property type="term" value="P:cerebellar granule cell precursor proliferation"/>
    <property type="evidence" value="ECO:0007669"/>
    <property type="project" value="Ensembl"/>
</dbReference>
<dbReference type="GO" id="GO:0006935">
    <property type="term" value="P:chemotaxis"/>
    <property type="evidence" value="ECO:0000304"/>
    <property type="project" value="ProtInc"/>
</dbReference>
<dbReference type="GO" id="GO:0060591">
    <property type="term" value="P:chondroblast differentiation"/>
    <property type="evidence" value="ECO:0000314"/>
    <property type="project" value="UniProtKB"/>
</dbReference>
<dbReference type="GO" id="GO:0060128">
    <property type="term" value="P:corticotropin hormone secreting cell differentiation"/>
    <property type="evidence" value="ECO:0007669"/>
    <property type="project" value="Ensembl"/>
</dbReference>
<dbReference type="GO" id="GO:0009792">
    <property type="term" value="P:embryo development ending in birth or egg hatching"/>
    <property type="evidence" value="ECO:0007669"/>
    <property type="project" value="Ensembl"/>
</dbReference>
<dbReference type="GO" id="GO:0048598">
    <property type="term" value="P:embryonic morphogenesis"/>
    <property type="evidence" value="ECO:0000304"/>
    <property type="project" value="DFLAT"/>
</dbReference>
<dbReference type="GO" id="GO:0001935">
    <property type="term" value="P:endothelial cell proliferation"/>
    <property type="evidence" value="ECO:0007669"/>
    <property type="project" value="Ensembl"/>
</dbReference>
<dbReference type="GO" id="GO:0070371">
    <property type="term" value="P:ERK1 and ERK2 cascade"/>
    <property type="evidence" value="ECO:0007669"/>
    <property type="project" value="Ensembl"/>
</dbReference>
<dbReference type="GO" id="GO:0008543">
    <property type="term" value="P:fibroblast growth factor receptor signaling pathway"/>
    <property type="evidence" value="ECO:0000314"/>
    <property type="project" value="UniProtKB"/>
</dbReference>
<dbReference type="GO" id="GO:0010001">
    <property type="term" value="P:glial cell differentiation"/>
    <property type="evidence" value="ECO:0007669"/>
    <property type="project" value="Ensembl"/>
</dbReference>
<dbReference type="GO" id="GO:0014843">
    <property type="term" value="P:growth factor dependent regulation of skeletal muscle satellite cell proliferation"/>
    <property type="evidence" value="ECO:0000315"/>
    <property type="project" value="AgBase"/>
</dbReference>
<dbReference type="GO" id="GO:0030214">
    <property type="term" value="P:hyaluronan catabolic process"/>
    <property type="evidence" value="ECO:0000314"/>
    <property type="project" value="UniProtKB"/>
</dbReference>
<dbReference type="GO" id="GO:0042491">
    <property type="term" value="P:inner ear auditory receptor cell differentiation"/>
    <property type="evidence" value="ECO:0007669"/>
    <property type="project" value="Ensembl"/>
</dbReference>
<dbReference type="GO" id="GO:0030324">
    <property type="term" value="P:lung development"/>
    <property type="evidence" value="ECO:0007669"/>
    <property type="project" value="Ensembl"/>
</dbReference>
<dbReference type="GO" id="GO:1904977">
    <property type="term" value="P:lymphatic endothelial cell migration"/>
    <property type="evidence" value="ECO:0007669"/>
    <property type="project" value="Ensembl"/>
</dbReference>
<dbReference type="GO" id="GO:0060644">
    <property type="term" value="P:mammary gland epithelial cell differentiation"/>
    <property type="evidence" value="ECO:0007669"/>
    <property type="project" value="Ensembl"/>
</dbReference>
<dbReference type="GO" id="GO:0043537">
    <property type="term" value="P:negative regulation of blood vessel endothelial cell migration"/>
    <property type="evidence" value="ECO:0000314"/>
    <property type="project" value="BHF-UCL"/>
</dbReference>
<dbReference type="GO" id="GO:0040037">
    <property type="term" value="P:negative regulation of fibroblast growth factor receptor signaling pathway"/>
    <property type="evidence" value="ECO:0000303"/>
    <property type="project" value="BHF-UCL"/>
</dbReference>
<dbReference type="GO" id="GO:0010764">
    <property type="term" value="P:negative regulation of fibroblast migration"/>
    <property type="evidence" value="ECO:0000314"/>
    <property type="project" value="UniProtKB"/>
</dbReference>
<dbReference type="GO" id="GO:0010629">
    <property type="term" value="P:negative regulation of gene expression"/>
    <property type="evidence" value="ECO:0000303"/>
    <property type="project" value="BHF-UCL"/>
</dbReference>
<dbReference type="GO" id="GO:1903377">
    <property type="term" value="P:negative regulation of oxidative stress-induced neuron intrinsic apoptotic signaling pathway"/>
    <property type="evidence" value="ECO:0007669"/>
    <property type="project" value="Ensembl"/>
</dbReference>
<dbReference type="GO" id="GO:2000647">
    <property type="term" value="P:negative regulation of stem cell proliferation"/>
    <property type="evidence" value="ECO:0007669"/>
    <property type="project" value="Ensembl"/>
</dbReference>
<dbReference type="GO" id="GO:0061045">
    <property type="term" value="P:negative regulation of wound healing"/>
    <property type="evidence" value="ECO:0000314"/>
    <property type="project" value="UniProtKB"/>
</dbReference>
<dbReference type="GO" id="GO:0007399">
    <property type="term" value="P:nervous system development"/>
    <property type="evidence" value="ECO:0000304"/>
    <property type="project" value="ProtInc"/>
</dbReference>
<dbReference type="GO" id="GO:0007405">
    <property type="term" value="P:neuroblast proliferation"/>
    <property type="evidence" value="ECO:0007669"/>
    <property type="project" value="Ensembl"/>
</dbReference>
<dbReference type="GO" id="GO:0022008">
    <property type="term" value="P:neurogenesis"/>
    <property type="evidence" value="ECO:0000318"/>
    <property type="project" value="GO_Central"/>
</dbReference>
<dbReference type="GO" id="GO:0001759">
    <property type="term" value="P:organ induction"/>
    <property type="evidence" value="ECO:0007669"/>
    <property type="project" value="Ensembl"/>
</dbReference>
<dbReference type="GO" id="GO:0001649">
    <property type="term" value="P:osteoblast differentiation"/>
    <property type="evidence" value="ECO:0007669"/>
    <property type="project" value="Ensembl"/>
</dbReference>
<dbReference type="GO" id="GO:0038001">
    <property type="term" value="P:paracrine signaling"/>
    <property type="evidence" value="ECO:0000250"/>
    <property type="project" value="ARUK-UCL"/>
</dbReference>
<dbReference type="GO" id="GO:0043491">
    <property type="term" value="P:phosphatidylinositol 3-kinase/protein kinase B signal transduction"/>
    <property type="evidence" value="ECO:0007669"/>
    <property type="project" value="Ensembl"/>
</dbReference>
<dbReference type="GO" id="GO:0045766">
    <property type="term" value="P:positive regulation of angiogenesis"/>
    <property type="evidence" value="ECO:0000314"/>
    <property type="project" value="UniProtKB"/>
</dbReference>
<dbReference type="GO" id="GO:1905555">
    <property type="term" value="P:positive regulation of blood vessel branching"/>
    <property type="evidence" value="ECO:0000314"/>
    <property type="project" value="BHF-UCL"/>
</dbReference>
<dbReference type="GO" id="GO:0043536">
    <property type="term" value="P:positive regulation of blood vessel endothelial cell migration"/>
    <property type="evidence" value="ECO:0000314"/>
    <property type="project" value="UniProtKB"/>
</dbReference>
<dbReference type="GO" id="GO:0090263">
    <property type="term" value="P:positive regulation of canonical Wnt signaling pathway"/>
    <property type="evidence" value="ECO:0007669"/>
    <property type="project" value="Ensembl"/>
</dbReference>
<dbReference type="GO" id="GO:0060045">
    <property type="term" value="P:positive regulation of cardiac muscle cell proliferation"/>
    <property type="evidence" value="ECO:0000314"/>
    <property type="project" value="BHF-UCL"/>
</dbReference>
<dbReference type="GO" id="GO:0051781">
    <property type="term" value="P:positive regulation of cell division"/>
    <property type="evidence" value="ECO:0007669"/>
    <property type="project" value="UniProtKB-KW"/>
</dbReference>
<dbReference type="GO" id="GO:0042660">
    <property type="term" value="P:positive regulation of cell fate specification"/>
    <property type="evidence" value="ECO:0000314"/>
    <property type="project" value="MGI"/>
</dbReference>
<dbReference type="GO" id="GO:0090050">
    <property type="term" value="P:positive regulation of cell migration involved in sprouting angiogenesis"/>
    <property type="evidence" value="ECO:0000314"/>
    <property type="project" value="UniProtKB"/>
</dbReference>
<dbReference type="GO" id="GO:0008284">
    <property type="term" value="P:positive regulation of cell population proliferation"/>
    <property type="evidence" value="ECO:0000314"/>
    <property type="project" value="MGI"/>
</dbReference>
<dbReference type="GO" id="GO:0021940">
    <property type="term" value="P:positive regulation of cerebellar granule cell precursor proliferation"/>
    <property type="evidence" value="ECO:0007669"/>
    <property type="project" value="Ensembl"/>
</dbReference>
<dbReference type="GO" id="GO:2000573">
    <property type="term" value="P:positive regulation of DNA biosynthetic process"/>
    <property type="evidence" value="ECO:0000314"/>
    <property type="project" value="UniProtKB"/>
</dbReference>
<dbReference type="GO" id="GO:2001028">
    <property type="term" value="P:positive regulation of endothelial cell chemotaxis"/>
    <property type="evidence" value="ECO:0000316"/>
    <property type="project" value="UniProtKB"/>
</dbReference>
<dbReference type="GO" id="GO:2000546">
    <property type="term" value="P:positive regulation of endothelial cell chemotaxis to fibroblast growth factor"/>
    <property type="evidence" value="ECO:0000314"/>
    <property type="project" value="UniProtKB"/>
</dbReference>
<dbReference type="GO" id="GO:0010595">
    <property type="term" value="P:positive regulation of endothelial cell migration"/>
    <property type="evidence" value="ECO:0000314"/>
    <property type="project" value="BHF-UCL"/>
</dbReference>
<dbReference type="GO" id="GO:0001938">
    <property type="term" value="P:positive regulation of endothelial cell proliferation"/>
    <property type="evidence" value="ECO:0000314"/>
    <property type="project" value="UniProtKB"/>
</dbReference>
<dbReference type="GO" id="GO:1905278">
    <property type="term" value="P:positive regulation of epithelial tube formation"/>
    <property type="evidence" value="ECO:0000314"/>
    <property type="project" value="BHF-UCL"/>
</dbReference>
<dbReference type="GO" id="GO:0070374">
    <property type="term" value="P:positive regulation of ERK1 and ERK2 cascade"/>
    <property type="evidence" value="ECO:0000314"/>
    <property type="project" value="UniProtKB"/>
</dbReference>
<dbReference type="GO" id="GO:0010628">
    <property type="term" value="P:positive regulation of gene expression"/>
    <property type="evidence" value="ECO:0007669"/>
    <property type="project" value="Ensembl"/>
</dbReference>
<dbReference type="GO" id="GO:0045609">
    <property type="term" value="P:positive regulation of inner ear auditory receptor cell differentiation"/>
    <property type="evidence" value="ECO:0007669"/>
    <property type="project" value="Ensembl"/>
</dbReference>
<dbReference type="GO" id="GO:1902748">
    <property type="term" value="P:positive regulation of lens fiber cell differentiation"/>
    <property type="evidence" value="ECO:0000314"/>
    <property type="project" value="UniProtKB"/>
</dbReference>
<dbReference type="GO" id="GO:0043406">
    <property type="term" value="P:positive regulation of MAP kinase activity"/>
    <property type="evidence" value="ECO:0000314"/>
    <property type="project" value="UniProtKB"/>
</dbReference>
<dbReference type="GO" id="GO:0043410">
    <property type="term" value="P:positive regulation of MAPK cascade"/>
    <property type="evidence" value="ECO:0000314"/>
    <property type="project" value="BHF-UCL"/>
</dbReference>
<dbReference type="GO" id="GO:1902895">
    <property type="term" value="P:positive regulation of miRNA transcription"/>
    <property type="evidence" value="ECO:0000303"/>
    <property type="project" value="BHF-UCL"/>
</dbReference>
<dbReference type="GO" id="GO:0002052">
    <property type="term" value="P:positive regulation of neuroblast proliferation"/>
    <property type="evidence" value="ECO:0007669"/>
    <property type="project" value="Ensembl"/>
</dbReference>
<dbReference type="GO" id="GO:1902913">
    <property type="term" value="P:positive regulation of neuroepithelial cell differentiation"/>
    <property type="evidence" value="ECO:0007669"/>
    <property type="project" value="Ensembl"/>
</dbReference>
<dbReference type="GO" id="GO:0045669">
    <property type="term" value="P:positive regulation of osteoblast differentiation"/>
    <property type="evidence" value="ECO:0007669"/>
    <property type="project" value="Ensembl"/>
</dbReference>
<dbReference type="GO" id="GO:0051897">
    <property type="term" value="P:positive regulation of phosphatidylinositol 3-kinase/protein kinase B signal transduction"/>
    <property type="evidence" value="ECO:0000314"/>
    <property type="project" value="DFLAT"/>
</dbReference>
<dbReference type="GO" id="GO:1903672">
    <property type="term" value="P:positive regulation of sprouting angiogenesis"/>
    <property type="evidence" value="ECO:0000314"/>
    <property type="project" value="UniProtKB"/>
</dbReference>
<dbReference type="GO" id="GO:2000738">
    <property type="term" value="P:positive regulation of stem cell differentiation"/>
    <property type="evidence" value="ECO:0007669"/>
    <property type="project" value="Ensembl"/>
</dbReference>
<dbReference type="GO" id="GO:2000648">
    <property type="term" value="P:positive regulation of stem cell proliferation"/>
    <property type="evidence" value="ECO:0007669"/>
    <property type="project" value="Ensembl"/>
</dbReference>
<dbReference type="GO" id="GO:0045944">
    <property type="term" value="P:positive regulation of transcription by RNA polymerase II"/>
    <property type="evidence" value="ECO:0000314"/>
    <property type="project" value="BHF-UCL"/>
</dbReference>
<dbReference type="GO" id="GO:1904707">
    <property type="term" value="P:positive regulation of vascular associated smooth muscle cell proliferation"/>
    <property type="evidence" value="ECO:0000316"/>
    <property type="project" value="BHF-UCL"/>
</dbReference>
<dbReference type="GO" id="GO:1905564">
    <property type="term" value="P:positive regulation of vascular endothelial cell proliferation"/>
    <property type="evidence" value="ECO:0000316"/>
    <property type="project" value="BHF-UCL"/>
</dbReference>
<dbReference type="GO" id="GO:0007265">
    <property type="term" value="P:Ras protein signal transduction"/>
    <property type="evidence" value="ECO:0000304"/>
    <property type="project" value="ProtInc"/>
</dbReference>
<dbReference type="GO" id="GO:0045765">
    <property type="term" value="P:regulation of angiogenesis"/>
    <property type="evidence" value="ECO:0000304"/>
    <property type="project" value="DFLAT"/>
</dbReference>
<dbReference type="GO" id="GO:1903587">
    <property type="term" value="P:regulation of blood vessel endothelial cell proliferation involved in sprouting angiogenesis"/>
    <property type="evidence" value="ECO:0000303"/>
    <property type="project" value="BHF-UCL"/>
</dbReference>
<dbReference type="GO" id="GO:0051726">
    <property type="term" value="P:regulation of cell cycle"/>
    <property type="evidence" value="ECO:0007669"/>
    <property type="project" value="Ensembl"/>
</dbReference>
<dbReference type="GO" id="GO:0030334">
    <property type="term" value="P:regulation of cell migration"/>
    <property type="evidence" value="ECO:0000318"/>
    <property type="project" value="GO_Central"/>
</dbReference>
<dbReference type="GO" id="GO:0090049">
    <property type="term" value="P:regulation of cell migration involved in sprouting angiogenesis"/>
    <property type="evidence" value="ECO:0000303"/>
    <property type="project" value="BHF-UCL"/>
</dbReference>
<dbReference type="GO" id="GO:2000544">
    <property type="term" value="P:regulation of endothelial cell chemotaxis to fibroblast growth factor"/>
    <property type="evidence" value="ECO:0000314"/>
    <property type="project" value="UniProtKB"/>
</dbReference>
<dbReference type="GO" id="GO:0046668">
    <property type="term" value="P:regulation of retinal cell programmed cell death"/>
    <property type="evidence" value="ECO:0007669"/>
    <property type="project" value="Ensembl"/>
</dbReference>
<dbReference type="GO" id="GO:0051209">
    <property type="term" value="P:release of sequestered calcium ion into cytosol"/>
    <property type="evidence" value="ECO:0000314"/>
    <property type="project" value="DFLAT"/>
</dbReference>
<dbReference type="GO" id="GO:0048678">
    <property type="term" value="P:response to axon injury"/>
    <property type="evidence" value="ECO:0007669"/>
    <property type="project" value="Ensembl"/>
</dbReference>
<dbReference type="GO" id="GO:1904567">
    <property type="term" value="P:response to wortmannin"/>
    <property type="evidence" value="ECO:0007669"/>
    <property type="project" value="Ensembl"/>
</dbReference>
<dbReference type="GO" id="GO:0007165">
    <property type="term" value="P:signal transduction"/>
    <property type="evidence" value="ECO:0000303"/>
    <property type="project" value="ProtInc"/>
</dbReference>
<dbReference type="GO" id="GO:0048864">
    <property type="term" value="P:stem cell development"/>
    <property type="evidence" value="ECO:0007669"/>
    <property type="project" value="Ensembl"/>
</dbReference>
<dbReference type="GO" id="GO:0072089">
    <property type="term" value="P:stem cell proliferation"/>
    <property type="evidence" value="ECO:0000303"/>
    <property type="project" value="ParkinsonsUK-UCL"/>
</dbReference>
<dbReference type="GO" id="GO:0021762">
    <property type="term" value="P:substantia nigra development"/>
    <property type="evidence" value="ECO:0007669"/>
    <property type="project" value="Ensembl"/>
</dbReference>
<dbReference type="GO" id="GO:0060129">
    <property type="term" value="P:thyroid-stimulating hormone-secreting cell differentiation"/>
    <property type="evidence" value="ECO:0007669"/>
    <property type="project" value="Ensembl"/>
</dbReference>
<dbReference type="GO" id="GO:0006366">
    <property type="term" value="P:transcription by RNA polymerase II"/>
    <property type="evidence" value="ECO:0007669"/>
    <property type="project" value="Ensembl"/>
</dbReference>
<dbReference type="GO" id="GO:0042060">
    <property type="term" value="P:wound healing"/>
    <property type="evidence" value="ECO:0000314"/>
    <property type="project" value="UniProtKB"/>
</dbReference>
<dbReference type="CDD" id="cd23314">
    <property type="entry name" value="beta-trefoil_FGF2"/>
    <property type="match status" value="1"/>
</dbReference>
<dbReference type="FunFam" id="2.80.10.50:FF:000020">
    <property type="entry name" value="Fibroblast growth factor 1"/>
    <property type="match status" value="1"/>
</dbReference>
<dbReference type="Gene3D" id="2.80.10.50">
    <property type="match status" value="1"/>
</dbReference>
<dbReference type="IDEAL" id="IID00438"/>
<dbReference type="InterPro" id="IPR002209">
    <property type="entry name" value="Fibroblast_GF_fam"/>
</dbReference>
<dbReference type="InterPro" id="IPR008996">
    <property type="entry name" value="IL1/FGF"/>
</dbReference>
<dbReference type="PANTHER" id="PTHR11486">
    <property type="entry name" value="FIBROBLAST GROWTH FACTOR"/>
    <property type="match status" value="1"/>
</dbReference>
<dbReference type="Pfam" id="PF00167">
    <property type="entry name" value="FGF"/>
    <property type="match status" value="1"/>
</dbReference>
<dbReference type="PRINTS" id="PR00263">
    <property type="entry name" value="HBGFFGF"/>
</dbReference>
<dbReference type="PRINTS" id="PR00262">
    <property type="entry name" value="IL1HBGF"/>
</dbReference>
<dbReference type="SMART" id="SM00442">
    <property type="entry name" value="FGF"/>
    <property type="match status" value="1"/>
</dbReference>
<dbReference type="SUPFAM" id="SSF50353">
    <property type="entry name" value="Cytokine"/>
    <property type="match status" value="1"/>
</dbReference>
<dbReference type="PROSITE" id="PS00247">
    <property type="entry name" value="HBGF_FGF"/>
    <property type="match status" value="1"/>
</dbReference>
<sequence length="288" mass="30770">MVGVGGGDVEDVTPRPGGCQISGRGARGCNGIPGAAAWEAALPRRRPRRHPSVNPRSRAAGSPRTRGRRTEERPSGSRLGDRGRGRALPGGRLGGRGRGRAPERVGGRGRGRGTAAPRAAPAARGSRPGPAGTMAAGSITTLPALPEDGGSGAFPPGHFKDPKRLYCKNGGFFLRIHPDGRVDGVREKSDPHIKLQLQAEERGVVSIKGVCANRYLAMKEDGRLLASKCVTDECFFFERLESNNYNTYRSRKYTSWYVALKRTGQYKLGSKTGPGQKAILFLPMSAKS</sequence>
<reference key="1">
    <citation type="journal article" date="1986" name="Cold Spring Harb. Symp. Quant. Biol.">
        <title>Human basic fibroblast growth factor: nucleotide sequence, genomic organization, and expression in mammalian cells.</title>
        <authorList>
            <person name="Abraham J.A."/>
            <person name="Whang J.L."/>
            <person name="Tumolo A."/>
            <person name="Mergia A."/>
            <person name="Fiddes J.C."/>
        </authorList>
    </citation>
    <scope>NUCLEOTIDE SEQUENCE [GENOMIC DNA]</scope>
</reference>
<reference key="2">
    <citation type="journal article" date="1986" name="EMBO J.">
        <title>Human basic fibroblast growth factor: nucleotide sequence and genomic organization.</title>
        <authorList>
            <person name="Abraham J.A."/>
            <person name="Whang J.L."/>
            <person name="Tumolo A."/>
            <person name="Mergia A."/>
            <person name="Friedman J."/>
            <person name="Gospodarowicz D."/>
            <person name="Fiddes J.C."/>
        </authorList>
    </citation>
    <scope>NUCLEOTIDE SEQUENCE [GENOMIC DNA / MRNA] (ISOFORM 1)</scope>
</reference>
<reference key="3">
    <citation type="journal article" date="1989" name="Proc. Natl. Acad. Sci. U.S.A.">
        <title>High molecular mass forms of basic fibroblast growth factor are initiated by alternative CUG codons.</title>
        <authorList>
            <person name="Prats H."/>
            <person name="Kaghad M."/>
            <person name="Prats A.C."/>
            <person name="Klagsbrun M."/>
            <person name="Lelias J.M."/>
            <person name="Liauzun P."/>
            <person name="Chalon P."/>
            <person name="Tauber J.P."/>
            <person name="Amalric F."/>
            <person name="Smith J.A."/>
            <person name="Caput D."/>
        </authorList>
    </citation>
    <scope>NUCLEOTIDE SEQUENCE [MRNA] (ISOFORMS 2; 3 AND 4)</scope>
    <scope>PROTEIN SEQUENCE OF 126-145 (ISOFORMS 1/2/4)</scope>
    <scope>ALTERNATIVE INITIATION</scope>
    <source>
        <tissue>Hepatoma</tissue>
    </source>
</reference>
<reference key="4">
    <citation type="journal article" date="2008" name="Nat. Methods">
        <title>Human protein factory for converting the transcriptome into an in vitro-expressed proteome.</title>
        <authorList>
            <person name="Goshima N."/>
            <person name="Kawamura Y."/>
            <person name="Fukumoto A."/>
            <person name="Miura A."/>
            <person name="Honma R."/>
            <person name="Satoh R."/>
            <person name="Wakamatsu A."/>
            <person name="Yamamoto J."/>
            <person name="Kimura K."/>
            <person name="Nishikawa T."/>
            <person name="Andoh T."/>
            <person name="Iida Y."/>
            <person name="Ishikawa K."/>
            <person name="Ito E."/>
            <person name="Kagawa N."/>
            <person name="Kaminaga C."/>
            <person name="Kanehori K."/>
            <person name="Kawakami B."/>
            <person name="Kenmochi K."/>
            <person name="Kimura R."/>
            <person name="Kobayashi M."/>
            <person name="Kuroita T."/>
            <person name="Kuwayama H."/>
            <person name="Maruyama Y."/>
            <person name="Matsuo K."/>
            <person name="Minami K."/>
            <person name="Mitsubori M."/>
            <person name="Mori M."/>
            <person name="Morishita R."/>
            <person name="Murase A."/>
            <person name="Nishikawa A."/>
            <person name="Nishikawa S."/>
            <person name="Okamoto T."/>
            <person name="Sakagami N."/>
            <person name="Sakamoto Y."/>
            <person name="Sasaki Y."/>
            <person name="Seki T."/>
            <person name="Sono S."/>
            <person name="Sugiyama A."/>
            <person name="Sumiya T."/>
            <person name="Takayama T."/>
            <person name="Takayama Y."/>
            <person name="Takeda H."/>
            <person name="Togashi T."/>
            <person name="Yahata K."/>
            <person name="Yamada H."/>
            <person name="Yanagisawa Y."/>
            <person name="Endo Y."/>
            <person name="Imamoto F."/>
            <person name="Kisu Y."/>
            <person name="Tanaka S."/>
            <person name="Isogai T."/>
            <person name="Imai J."/>
            <person name="Watanabe S."/>
            <person name="Nomura N."/>
        </authorList>
    </citation>
    <scope>NUCLEOTIDE SEQUENCE [LARGE SCALE MRNA] (ISOFORM 3)</scope>
</reference>
<reference key="5">
    <citation type="submission" date="2007-03" db="EMBL/GenBank/DDBJ databases">
        <authorList>
            <consortium name="NIEHS SNPs program"/>
        </authorList>
    </citation>
    <scope>NUCLEOTIDE SEQUENCE [GENOMIC DNA]</scope>
</reference>
<reference key="6">
    <citation type="journal article" date="2005" name="Nature">
        <title>Generation and annotation of the DNA sequences of human chromosomes 2 and 4.</title>
        <authorList>
            <person name="Hillier L.W."/>
            <person name="Graves T.A."/>
            <person name="Fulton R.S."/>
            <person name="Fulton L.A."/>
            <person name="Pepin K.H."/>
            <person name="Minx P."/>
            <person name="Wagner-McPherson C."/>
            <person name="Layman D."/>
            <person name="Wylie K."/>
            <person name="Sekhon M."/>
            <person name="Becker M.C."/>
            <person name="Fewell G.A."/>
            <person name="Delehaunty K.D."/>
            <person name="Miner T.L."/>
            <person name="Nash W.E."/>
            <person name="Kremitzki C."/>
            <person name="Oddy L."/>
            <person name="Du H."/>
            <person name="Sun H."/>
            <person name="Bradshaw-Cordum H."/>
            <person name="Ali J."/>
            <person name="Carter J."/>
            <person name="Cordes M."/>
            <person name="Harris A."/>
            <person name="Isak A."/>
            <person name="van Brunt A."/>
            <person name="Nguyen C."/>
            <person name="Du F."/>
            <person name="Courtney L."/>
            <person name="Kalicki J."/>
            <person name="Ozersky P."/>
            <person name="Abbott S."/>
            <person name="Armstrong J."/>
            <person name="Belter E.A."/>
            <person name="Caruso L."/>
            <person name="Cedroni M."/>
            <person name="Cotton M."/>
            <person name="Davidson T."/>
            <person name="Desai A."/>
            <person name="Elliott G."/>
            <person name="Erb T."/>
            <person name="Fronick C."/>
            <person name="Gaige T."/>
            <person name="Haakenson W."/>
            <person name="Haglund K."/>
            <person name="Holmes A."/>
            <person name="Harkins R."/>
            <person name="Kim K."/>
            <person name="Kruchowski S.S."/>
            <person name="Strong C.M."/>
            <person name="Grewal N."/>
            <person name="Goyea E."/>
            <person name="Hou S."/>
            <person name="Levy A."/>
            <person name="Martinka S."/>
            <person name="Mead K."/>
            <person name="McLellan M.D."/>
            <person name="Meyer R."/>
            <person name="Randall-Maher J."/>
            <person name="Tomlinson C."/>
            <person name="Dauphin-Kohlberg S."/>
            <person name="Kozlowicz-Reilly A."/>
            <person name="Shah N."/>
            <person name="Swearengen-Shahid S."/>
            <person name="Snider J."/>
            <person name="Strong J.T."/>
            <person name="Thompson J."/>
            <person name="Yoakum M."/>
            <person name="Leonard S."/>
            <person name="Pearman C."/>
            <person name="Trani L."/>
            <person name="Radionenko M."/>
            <person name="Waligorski J.E."/>
            <person name="Wang C."/>
            <person name="Rock S.M."/>
            <person name="Tin-Wollam A.-M."/>
            <person name="Maupin R."/>
            <person name="Latreille P."/>
            <person name="Wendl M.C."/>
            <person name="Yang S.-P."/>
            <person name="Pohl C."/>
            <person name="Wallis J.W."/>
            <person name="Spieth J."/>
            <person name="Bieri T.A."/>
            <person name="Berkowicz N."/>
            <person name="Nelson J.O."/>
            <person name="Osborne J."/>
            <person name="Ding L."/>
            <person name="Meyer R."/>
            <person name="Sabo A."/>
            <person name="Shotland Y."/>
            <person name="Sinha P."/>
            <person name="Wohldmann P.E."/>
            <person name="Cook L.L."/>
            <person name="Hickenbotham M.T."/>
            <person name="Eldred J."/>
            <person name="Williams D."/>
            <person name="Jones T.A."/>
            <person name="She X."/>
            <person name="Ciccarelli F.D."/>
            <person name="Izaurralde E."/>
            <person name="Taylor J."/>
            <person name="Schmutz J."/>
            <person name="Myers R.M."/>
            <person name="Cox D.R."/>
            <person name="Huang X."/>
            <person name="McPherson J.D."/>
            <person name="Mardis E.R."/>
            <person name="Clifton S.W."/>
            <person name="Warren W.C."/>
            <person name="Chinwalla A.T."/>
            <person name="Eddy S.R."/>
            <person name="Marra M.A."/>
            <person name="Ovcharenko I."/>
            <person name="Furey T.S."/>
            <person name="Miller W."/>
            <person name="Eichler E.E."/>
            <person name="Bork P."/>
            <person name="Suyama M."/>
            <person name="Torrents D."/>
            <person name="Waterston R.H."/>
            <person name="Wilson R.K."/>
        </authorList>
    </citation>
    <scope>NUCLEOTIDE SEQUENCE [LARGE SCALE GENOMIC DNA]</scope>
</reference>
<reference key="7">
    <citation type="submission" date="2005-09" db="EMBL/GenBank/DDBJ databases">
        <authorList>
            <person name="Mural R.J."/>
            <person name="Istrail S."/>
            <person name="Sutton G.G."/>
            <person name="Florea L."/>
            <person name="Halpern A.L."/>
            <person name="Mobarry C.M."/>
            <person name="Lippert R."/>
            <person name="Walenz B."/>
            <person name="Shatkay H."/>
            <person name="Dew I."/>
            <person name="Miller J.R."/>
            <person name="Flanigan M.J."/>
            <person name="Edwards N.J."/>
            <person name="Bolanos R."/>
            <person name="Fasulo D."/>
            <person name="Halldorsson B.V."/>
            <person name="Hannenhalli S."/>
            <person name="Turner R."/>
            <person name="Yooseph S."/>
            <person name="Lu F."/>
            <person name="Nusskern D.R."/>
            <person name="Shue B.C."/>
            <person name="Zheng X.H."/>
            <person name="Zhong F."/>
            <person name="Delcher A.L."/>
            <person name="Huson D.H."/>
            <person name="Kravitz S.A."/>
            <person name="Mouchard L."/>
            <person name="Reinert K."/>
            <person name="Remington K.A."/>
            <person name="Clark A.G."/>
            <person name="Waterman M.S."/>
            <person name="Eichler E.E."/>
            <person name="Adams M.D."/>
            <person name="Hunkapiller M.W."/>
            <person name="Myers E.W."/>
            <person name="Venter J.C."/>
        </authorList>
    </citation>
    <scope>NUCLEOTIDE SEQUENCE [LARGE SCALE GENOMIC DNA]</scope>
</reference>
<reference key="8">
    <citation type="journal article" date="1991" name="Ann. N. Y. Acad. Sci.">
        <title>Basic fibroblast growth factor gene expression.</title>
        <authorList>
            <person name="Florkiewicz R.Z."/>
            <person name="Shibata F."/>
            <person name="Barankiewicz T."/>
            <person name="Baird A."/>
            <person name="Gonzalez A.M."/>
            <person name="Florkiewicz E."/>
            <person name="Shah N."/>
        </authorList>
    </citation>
    <scope>NUCLEOTIDE SEQUENCE [GENOMIC DNA] OF 1-192</scope>
</reference>
<reference key="9">
    <citation type="submission" date="2003-03" db="EMBL/GenBank/DDBJ databases">
        <title>Mutations in the 5' untranslated region of the FGF-2 gene.</title>
        <authorList>
            <person name="Handschug K."/>
            <person name="Archoukieh E."/>
            <person name="Glaeser C."/>
        </authorList>
    </citation>
    <scope>NUCLEOTIDE SEQUENCE [GENOMIC DNA] OF 1-192</scope>
    <source>
        <tissue>Blood</tissue>
    </source>
</reference>
<reference key="10">
    <citation type="journal article" date="1987" name="FEBS Lett.">
        <title>Cloning and expression of cDNA encoding human basic fibroblast growth factor.</title>
        <authorList>
            <person name="Kurokawa T."/>
            <person name="Sasada R."/>
            <person name="Iwane M."/>
            <person name="Igarashi K."/>
        </authorList>
    </citation>
    <scope>NUCLEOTIDE SEQUENCE [MRNA] OF 20-288 (ISOFORM 1)</scope>
</reference>
<reference key="11">
    <citation type="journal article" date="1991" name="Jpn. J. Cancer Res.">
        <title>Characterization of high-molecular-mass forms of basic fibroblast growth factor produced by hepatocellular carcinoma cells: possible involvement of basic fibroblast growth factor in hepatocarcinogenesis.</title>
        <authorList>
            <person name="Shimoyama Y."/>
            <person name="Gotoh M."/>
            <person name="Ino Y."/>
            <person name="Sakamoto M."/>
            <person name="Kato K."/>
            <person name="Hirohashi S."/>
        </authorList>
    </citation>
    <scope>PROTEIN SEQUENCE OF 94-107 AND 162-173</scope>
    <scope>FUNCTION</scope>
    <scope>BIOPHYSICOCHEMICAL PROPERTIES</scope>
    <scope>TISSUE SPECIFICITY</scope>
    <source>
        <tissue>Hepatoma</tissue>
    </source>
</reference>
<reference key="12">
    <citation type="journal article" date="1996" name="Cancer Res.">
        <title>Human amniotic tumor that induces new bone formation in vivo produces growth-regulatory activity in vitro for osteoblasts identified as an extended form of basic fibroblast growth factor.</title>
        <authorList>
            <person name="Izbicka E."/>
            <person name="Dunstan C."/>
            <person name="Esparza J."/>
            <person name="Jacobs C."/>
            <person name="Sabatini M."/>
            <person name="Mundy G.R."/>
        </authorList>
    </citation>
    <scope>PROTEIN SEQUENCE OF 125-140 (ISOFORMS 1/2/4)</scope>
</reference>
<reference key="13">
    <citation type="journal article" date="1987" name="Biochem. Biophys. Res. Commun.">
        <title>A form of human basic fibroblast growth factor with an extended amino terminus.</title>
        <authorList>
            <person name="Sommer A."/>
            <person name="Brewer M.T."/>
            <person name="Thompson R.C."/>
            <person name="Moscatelli D."/>
            <person name="Presta M."/>
            <person name="Rifkin D.B."/>
        </authorList>
    </citation>
    <scope>NUCLEOTIDE SEQUENCE [MRNA] OF 132-288 (ISOFORMS 1/2/4)</scope>
    <scope>PROTEIN SEQUENCE OF 132-148; 153-160; 165-247; 252-261 AND 267-288 (ISOFORMS 2/4)</scope>
    <source>
        <tissue>Hepatoma</tissue>
        <tissue>Placenta</tissue>
    </source>
</reference>
<reference key="14">
    <citation type="journal article" date="1987" name="Biochem. Biophys. Res. Commun.">
        <title>Amino-terminal sequence of a large form of basic fibroblast growth factor isolated from human benign prostatic hyperplastic tissue.</title>
        <authorList>
            <person name="Story M.T."/>
            <person name="Esch F."/>
            <person name="Shimasaki S."/>
            <person name="Sasse J."/>
            <person name="Jacobs S.C."/>
            <person name="Lawson R.K."/>
        </authorList>
    </citation>
    <scope>PROTEIN SEQUENCE OF 135-155 (ISOFORMS 1/2/3/4)</scope>
</reference>
<reference key="15">
    <citation type="submission" date="2004-11" db="EMBL/GenBank/DDBJ databases">
        <authorList>
            <person name="Zhang H.J."/>
            <person name="Zhang S.M."/>
            <person name="Zhuang H."/>
        </authorList>
    </citation>
    <scope>NUCLEOTIDE SEQUENCE [MRNA] OF 143-288 (ISOFORMS 1/2/3/4)</scope>
</reference>
<reference key="16">
    <citation type="journal article" date="1986" name="Biochem. Biophys. Res. Commun.">
        <title>Human brain-derived acidic and basic fibroblast growth factors: amino terminal sequences and specific mitogenic activities.</title>
        <authorList>
            <person name="Gimenez-Gallego G."/>
            <person name="Conn G."/>
            <person name="Hatcher V.B."/>
            <person name="Thomas K.A."/>
        </authorList>
    </citation>
    <scope>PROTEIN SEQUENCE OF 143-172 (ISOFORMS 1/2/3/4)</scope>
    <scope>FUNCTION</scope>
</reference>
<reference key="17">
    <citation type="journal article" date="1986" name="FEBS Lett.">
        <title>Partial molecular characterization of endothelial cell mitogens from human brain: acidic and basic fibroblast growth factors.</title>
        <authorList>
            <person name="Gautschi P."/>
            <person name="Frater-Schroeder M."/>
            <person name="Boehlen P."/>
        </authorList>
    </citation>
    <scope>PROTEIN SEQUENCE OF 143-168 (ISOFORMS 1/2/3/4)</scope>
    <scope>FUNCTION</scope>
</reference>
<reference key="18">
    <citation type="journal article" date="1992" name="Biochem. Biophys. Res. Commun.">
        <title>Reverse transcription with nested polymerase chain reaction shows expression of basic fibroblast growth factor transcripts in human granulosa and cumulus cells from in vitro fertilisation patients.</title>
        <authorList>
            <person name="Watson R."/>
            <person name="Anthony F."/>
            <person name="Pickett M."/>
            <person name="Lambden P."/>
            <person name="Masson G.M."/>
            <person name="Thomas E.J."/>
        </authorList>
    </citation>
    <scope>NUCLEOTIDE SEQUENCE [MRNA] OF 173-260 (ISOFORMS 1/2/3/4)</scope>
    <scope>TISSUE SPECIFICITY</scope>
</reference>
<reference key="19">
    <citation type="journal article" date="1991" name="J. Biol. Chem.">
        <title>Characterization and molecular cloning of a putative binding protein for heparin-binding growth factors.</title>
        <authorList>
            <person name="Wu D.Q."/>
            <person name="Kan M.K."/>
            <person name="Sato G.H."/>
            <person name="Okamoto T."/>
            <person name="Sato J.D."/>
        </authorList>
    </citation>
    <scope>IDENTIFICATION IN A COMPLEX WITH FGFBP1 AND FGF1</scope>
</reference>
<reference key="20">
    <citation type="journal article" date="1996" name="J. Biol. Chem.">
        <title>Receptor specificity of the fibroblast growth factor family.</title>
        <authorList>
            <person name="Ornitz D.M."/>
            <person name="Xu J."/>
            <person name="Colvin J.S."/>
            <person name="McEwen D.G."/>
            <person name="MacArthur C.A."/>
            <person name="Coulier F."/>
            <person name="Gao G."/>
            <person name="Goldfarb M."/>
        </authorList>
    </citation>
    <scope>FUNCTION</scope>
    <scope>INTERACTION WITH FGFR1; FGFR2; FGFR3 AND FGFR4</scope>
</reference>
<reference key="21">
    <citation type="journal article" date="1999" name="J. Biol. Chem.">
        <title>High-affinity binding of basic fibroblast growth factor and platelet-derived growth factor-AA to the core protein of the NG2 proteoglycan.</title>
        <authorList>
            <person name="Goretzki L."/>
            <person name="Burg M.A."/>
            <person name="Grako K.A."/>
            <person name="Stallcup W.B."/>
        </authorList>
    </citation>
    <scope>INTERACTION WITH CSPG4</scope>
</reference>
<reference key="22">
    <citation type="journal article" date="2001" name="J. Biol. Chem.">
        <title>Enhancement of fibroblast growth factor (FGF) activity by an FGF-binding protein.</title>
        <authorList>
            <person name="Tassi E."/>
            <person name="Al-Attar A."/>
            <person name="Aigner A."/>
            <person name="Swift M.R."/>
            <person name="McDonnell K."/>
            <person name="Karavanov A."/>
            <person name="Wellstein A."/>
        </authorList>
    </citation>
    <scope>INTERACTION WITH FGFBP1</scope>
</reference>
<reference key="23">
    <citation type="journal article" date="2002" name="J. Biol. Chem.">
        <title>Identification of ribosome-binding protein p34 as an intracellular protein that binds acidic fibroblast growth factor.</title>
        <authorList>
            <person name="Skjerpen C.S."/>
            <person name="Wesche J."/>
            <person name="Olsnes S."/>
        </authorList>
    </citation>
    <scope>INTERACTION WITH FGF1</scope>
</reference>
<reference key="24">
    <citation type="journal article" date="2006" name="J. Biol. Chem.">
        <title>Identification of the fibroblast growth factor (FGF)-interacting domain in a secreted FGF-binding protein by phage display.</title>
        <authorList>
            <person name="Xie B."/>
            <person name="Tassi E."/>
            <person name="Swift M.R."/>
            <person name="McDonnell K."/>
            <person name="Bowden E.T."/>
            <person name="Wang S."/>
            <person name="Ueda Y."/>
            <person name="Tomita Y."/>
            <person name="Riegel A.T."/>
            <person name="Wellstein A."/>
        </authorList>
    </citation>
    <scope>INTERACTION WITH FGFBP1</scope>
</reference>
<reference key="25">
    <citation type="journal article" date="2008" name="J. Biol. Chem.">
        <title>Effect of FGF-binding protein 3 on vascular permeability.</title>
        <authorList>
            <person name="Zhang W."/>
            <person name="Chen Y."/>
            <person name="Swift M.R."/>
            <person name="Tassi E."/>
            <person name="Stylianou D.C."/>
            <person name="Gibby K.A."/>
            <person name="Riegel A.T."/>
            <person name="Wellstein A."/>
        </authorList>
    </citation>
    <scope>INTERACTION WITH FGFBP3</scope>
</reference>
<reference key="26">
    <citation type="journal article" date="2010" name="Traffic">
        <title>Tec-kinase-mediated phosphorylation of fibroblast growth factor 2 is essential for unconventional secretion.</title>
        <authorList>
            <person name="Ebert A.D."/>
            <person name="Laussmann M."/>
            <person name="Wegehingel S."/>
            <person name="Kaderali L."/>
            <person name="Erfle H."/>
            <person name="Reichert J."/>
            <person name="Lechner J."/>
            <person name="Beer H.D."/>
            <person name="Pepperkok R."/>
            <person name="Nickel W."/>
        </authorList>
    </citation>
    <scope>PHOSPHORYLATION AT TYR-215</scope>
    <scope>INTERACTION WITH TEC</scope>
    <scope>SUBCELLULAR LOCATION</scope>
</reference>
<reference key="27">
    <citation type="journal article" date="2005" name="Cytokine Growth Factor Rev.">
        <title>Cellular signaling by fibroblast growth factor receptors.</title>
        <authorList>
            <person name="Eswarakumar V.P."/>
            <person name="Lax I."/>
            <person name="Schlessinger J."/>
        </authorList>
    </citation>
    <scope>REVIEW</scope>
</reference>
<reference key="28">
    <citation type="journal article" date="2010" name="Nat. Rev. Cancer">
        <title>Fibroblast growth factor signalling: from development to cancer.</title>
        <authorList>
            <person name="Turner N."/>
            <person name="Grose R."/>
        </authorList>
    </citation>
    <scope>REVIEW</scope>
</reference>
<reference key="29">
    <citation type="journal article" date="2012" name="Traffic">
        <title>Nuclear import of exogenous FGF1 requires the ER-protein LRRC59 and the importins Kpnalpha1 and Kpnbeta1.</title>
        <authorList>
            <person name="Zhen Y."/>
            <person name="Sorensen V."/>
            <person name="Skjerpen C.S."/>
            <person name="Haugsten E.M."/>
            <person name="Jin Y."/>
            <person name="Walchli S."/>
            <person name="Olsnes S."/>
            <person name="Wiedlocha A."/>
        </authorList>
    </citation>
    <scope>SUBCELLULAR LOCATION</scope>
</reference>
<reference key="30">
    <citation type="journal article" date="2013" name="PLoS ONE">
        <title>A dominant-negative FGF1 mutant (the R50E mutant) suppresses tumorigenesis and angiogenesis.</title>
        <authorList>
            <person name="Mori S."/>
            <person name="Tran V."/>
            <person name="Nishikawa K."/>
            <person name="Kaneda T."/>
            <person name="Hamada Y."/>
            <person name="Kawaguchi N."/>
            <person name="Fujita M."/>
            <person name="Saegusa J."/>
            <person name="Takada Y.K."/>
            <person name="Matsuura N."/>
            <person name="Zhao M."/>
            <person name="Takada Y."/>
        </authorList>
    </citation>
    <scope>FUNCTION</scope>
</reference>
<reference key="31">
    <citation type="journal article" date="2013" name="PLoS ONE">
        <authorList>
            <person name="Mori S."/>
            <person name="Tran V."/>
            <person name="Nishikawa K."/>
            <person name="Kaneda T."/>
            <person name="Hamada Y."/>
            <person name="Kawaguchi N."/>
            <person name="Fujita M."/>
            <person name="Saegusa J."/>
            <person name="Takada Y.K."/>
            <person name="Matsuura N."/>
            <person name="Zhao M."/>
            <person name="Takada Y."/>
        </authorList>
    </citation>
    <scope>ERRATUM OF PUBMED:23469107</scope>
</reference>
<reference key="32">
    <citation type="journal article" date="2014" name="Proc. Natl. Acad. Sci. U.S.A.">
        <title>Mapping of SUMO sites and analysis of SUMOylation changes induced by external stimuli.</title>
        <authorList>
            <person name="Impens F."/>
            <person name="Radoshevich L."/>
            <person name="Cossart P."/>
            <person name="Ribet D."/>
        </authorList>
    </citation>
    <scope>SUMOYLATION [LARGE SCALE ANALYSIS] AT LYS-228</scope>
    <scope>IDENTIFICATION BY MASS SPECTROMETRY [LARGE SCALE ANALYSIS]</scope>
</reference>
<reference key="33">
    <citation type="journal article" date="2017" name="Biosci. Rep.">
        <title>The integrin-binding defective FGF2 mutants potently suppress FGF2 signalling and angiogenesis.</title>
        <authorList>
            <person name="Mori S."/>
            <person name="Hatori N."/>
            <person name="Kawaguchi N."/>
            <person name="Hamada Y."/>
            <person name="Shih T.C."/>
            <person name="Wu C.Y."/>
            <person name="Lam K.S."/>
            <person name="Matsuura N."/>
            <person name="Yamamoto H."/>
            <person name="Takada Y.K."/>
            <person name="Takada Y."/>
        </authorList>
    </citation>
    <scope>FUNCTION</scope>
    <scope>INTERACTION WITH INTEGRIN ITGAV:ITGB3</scope>
    <scope>SITES IMPORTANT FOR INTEGRIN BINDING</scope>
    <scope>MUTAGENESIS OF ARG-181; ARG-186; LYS-188; 261-LYS-ARG-262 AND LYS-267</scope>
</reference>
<reference key="34">
    <citation type="journal article" date="2018" name="Exp. Eye Res.">
        <title>Negative regulation of lens fiber cell differentiation by RTK antagonists Spry and Spred.</title>
        <authorList>
            <person name="Zhao G."/>
            <person name="Bailey C.G."/>
            <person name="Feng Y."/>
            <person name="Rasko J."/>
            <person name="Lovicu F.J."/>
        </authorList>
    </citation>
    <scope>FUNCTION</scope>
</reference>
<reference key="35">
    <citation type="journal article" date="1991" name="J. Biochem.">
        <title>Crystal structure of basic fibroblast growth factor at 1.6-A resolution.</title>
        <authorList>
            <person name="Ago H."/>
            <person name="Kitagawa Y."/>
            <person name="Fujishima A."/>
            <person name="Matsuura Y."/>
            <person name="Katsube Y."/>
        </authorList>
    </citation>
    <scope>X-RAY CRYSTALLOGRAPHY (1.6 ANGSTROMS) OF 143-288</scope>
</reference>
<reference key="36">
    <citation type="journal article" date="1991" name="Proc. Natl. Acad. Sci. U.S.A.">
        <title>Three-dimensional structure of human basic fibroblast growth factor.</title>
        <authorList>
            <person name="Eriksson A.E."/>
            <person name="Cousens L.S."/>
            <person name="Weaver L.H."/>
            <person name="Matthews B.W."/>
        </authorList>
    </citation>
    <scope>X-RAY CRYSTALLOGRAPHY (2.2 ANGSTROMS) OF 143-288</scope>
</reference>
<reference key="37">
    <citation type="journal article" date="1991" name="Proc. Natl. Acad. Sci. U.S.A.">
        <title>Three-dimensional structure of human basic fibroblast growth factor, a structural homolog of interleukin 1 beta.</title>
        <authorList>
            <person name="Zhang J."/>
            <person name="Cousens L.S."/>
            <person name="Barr P.J."/>
            <person name="Sprang S.R."/>
        </authorList>
    </citation>
    <scope>X-RAY CRYSTALLOGRAPHY (1.8 ANGSTROMS) OF 143-288</scope>
</reference>
<reference key="38">
    <citation type="journal article" date="1991" name="Science">
        <title>Three-dimensional structures of acidic and basic fibroblast growth factors.</title>
        <authorList>
            <person name="Zhu X."/>
            <person name="Komiya H."/>
            <person name="Chirino A."/>
            <person name="Faham S."/>
            <person name="Fox G.M."/>
            <person name="Arakawa T."/>
            <person name="Hsu B.T."/>
            <person name="Rees D.C."/>
        </authorList>
    </citation>
    <scope>X-RAY CRYSTALLOGRAPHY (2.8 ANGSTROMS) OF 135-288</scope>
</reference>
<reference key="39">
    <citation type="journal article" date="1993" name="Protein Sci.">
        <title>Refinement of the structure of human basic fibroblast growth factor at 1.6-A resolution and analysis of presumed heparin binding sites by selenate substitution.</title>
        <authorList>
            <person name="Eriksson A.E."/>
            <person name="Cousens L.S."/>
            <person name="Matthews B.W."/>
        </authorList>
    </citation>
    <scope>X-RAY CRYSTALLOGRAPHY (1.6 ANGSTROMS) OF 143-288</scope>
</reference>
<reference key="40">
    <citation type="journal article" date="2001" name="Proc. Natl. Acad. Sci. U.S.A.">
        <title>Structural basis for fibroblast growth factor receptor 2 activation in Apert syndrome.</title>
        <authorList>
            <person name="Ibrahimi O.A."/>
            <person name="Eliseenkova A.V."/>
            <person name="Plotnikov A.N."/>
            <person name="Yu K."/>
            <person name="Ornitz D.M."/>
            <person name="Mohammadi M."/>
        </authorList>
    </citation>
    <scope>X-RAY CRYSTALLOGRAPHY (2.7 ANGSTROMS) OF 134-288 IN COMPLEX WITH FGFR2</scope>
</reference>
<reference key="41">
    <citation type="journal article" date="1996" name="Biochemistry">
        <title>High-resolution solution structure of basic fibroblast growth factor determined by multidimensional heteronuclear magnetic resonance spectroscopy.</title>
        <authorList>
            <person name="Moy F.J."/>
            <person name="Seddon A.P."/>
            <person name="Boehlen P."/>
            <person name="Powers R."/>
        </authorList>
    </citation>
    <scope>STRUCTURE BY NMR OF 134-288</scope>
</reference>
<comment type="function">
    <text evidence="13 19 20 21">Acts as a ligand for FGFR1, FGFR2, FGFR3 and FGFR4 (PubMed:8663044). Also acts as an integrin ligand which is required for FGF2 signaling (PubMed:28302677). Binds to integrin ITGAV:ITGB3 (PubMed:28302677). Plays an important role in the regulation of cell survival, cell division, cell differentiation and cell migration (PubMed:28302677, PubMed:8663044). Functions as a potent mitogen in vitro (PubMed:1721615, PubMed:3732516, PubMed:3964259). Can induce angiogenesis (PubMed:23469107, PubMed:28302677). Mediates phosphorylation of ERK1/2 and thereby promotes retinal lens fiber differentiation (PubMed:29501879).</text>
</comment>
<comment type="biophysicochemical properties">
    <phDependence>
        <text evidence="13">Retains almost half of its activity after treatment at pH 2.0 for 3 hours at 20 degrees Celsius.</text>
    </phDependence>
    <temperatureDependence>
        <text evidence="13">Inactivated after 3 minutes at 60 degrees Celsius or 1 minute at 80 degrees Celsius.</text>
    </temperatureDependence>
</comment>
<comment type="subunit">
    <text evidence="2 3 7 8 9 10 12 14 15 16 18 22">Monomer. Homodimer. Interacts with FGFR1, FGFR2, FGFR3 and FGFR4. Affinity between fibroblast growth factors (FGFs) and their receptors is increased by heparan sulfate glycosaminoglycans that function as coreceptors. Interacts with CSPG4, FGFBP1 and TEC. Found in a complex with FGFBP1, FGF1 and FGF2. Interacts with FGFBP3 (PubMed:18669637). Interacts with integrin ITGAV:ITGB3; the interaction is required for FGF2 signaling (PubMed:28302677). Interacts with SNORC (via the extracellular domain) (By similarity). Interacts with glypican GPC3 (By similarity).</text>
</comment>
<comment type="interaction">
    <interactant intactId="EBI-977447">
        <id>P09038</id>
    </interactant>
    <interactant intactId="EBI-516667">
        <id>P29466</id>
        <label>CASP1</label>
    </interactant>
    <organismsDiffer>false</organismsDiffer>
    <experiments>2</experiments>
</comment>
<comment type="interaction">
    <interactant intactId="EBI-977447">
        <id>P09038</id>
    </interactant>
    <interactant intactId="EBI-953742">
        <id>Q14512</id>
        <label>FGFBP1</label>
    </interactant>
    <organismsDiffer>false</organismsDiffer>
    <experiments>3</experiments>
</comment>
<comment type="interaction">
    <interactant intactId="EBI-977447">
        <id>P09038</id>
    </interactant>
    <interactant intactId="EBI-1028277">
        <id>P11362</id>
        <label>FGFR1</label>
    </interactant>
    <organismsDiffer>false</organismsDiffer>
    <experiments>9</experiments>
</comment>
<comment type="interaction">
    <interactant intactId="EBI-977447">
        <id>P09038</id>
    </interactant>
    <interactant intactId="EBI-15609945">
        <id>P11362-7</id>
        <label>FGFR1</label>
    </interactant>
    <organismsDiffer>false</organismsDiffer>
    <experiments>2</experiments>
</comment>
<comment type="interaction">
    <interactant intactId="EBI-977447">
        <id>P09038</id>
    </interactant>
    <interactant intactId="EBI-6622185">
        <id>P11362-14</id>
        <label>FGFR1</label>
    </interactant>
    <organismsDiffer>false</organismsDiffer>
    <experiments>2</experiments>
</comment>
<comment type="interaction">
    <interactant intactId="EBI-977447">
        <id>P09038</id>
    </interactant>
    <interactant intactId="EBI-1028658">
        <id>P21802</id>
        <label>FGFR2</label>
    </interactant>
    <organismsDiffer>false</organismsDiffer>
    <experiments>5</experiments>
</comment>
<comment type="interaction">
    <interactant intactId="EBI-977447">
        <id>P09038</id>
    </interactant>
    <interactant intactId="EBI-15489960">
        <id>P21802-1</id>
        <label>FGFR2</label>
    </interactant>
    <organismsDiffer>false</organismsDiffer>
    <experiments>2</experiments>
</comment>
<comment type="interaction">
    <interactant intactId="EBI-977447">
        <id>P09038</id>
    </interactant>
    <interactant intactId="EBI-11574553">
        <id>P26022</id>
        <label>PTX3</label>
    </interactant>
    <organismsDiffer>false</organismsDiffer>
    <experiments>16</experiments>
</comment>
<comment type="interaction">
    <interactant intactId="EBI-11122080">
        <id>P09038-2</id>
    </interactant>
    <interactant intactId="EBI-1028658">
        <id>P21802</id>
        <label>FGFR2</label>
    </interactant>
    <organismsDiffer>false</organismsDiffer>
    <experiments>2</experiments>
</comment>
<comment type="subcellular location">
    <subcellularLocation>
        <location evidence="16">Secreted</location>
    </subcellularLocation>
    <subcellularLocation>
        <location evidence="17">Nucleus</location>
    </subcellularLocation>
    <text evidence="16 17">Exported from cells by an endoplasmic reticulum (ER)/Golgi-independent mechanism. Unconventional secretion of FGF2 occurs by direct translocation across the plasma membrane (PubMed:20230531). Binding of exogenous FGF2 to FGFR facilitates endocytosis followed by translocation of FGF2 across endosomal membrane into the cytosol (PubMed:22321063). Nuclear import from the cytosol requires the classical nuclear import machinery, involving proteins KPNA1 and KPNB1, as well as CEP57 (PubMed:22321063).</text>
</comment>
<comment type="alternative products">
    <event type="alternative initiation"/>
    <isoform>
        <id>P09038-4</id>
        <name>1</name>
        <sequence type="displayed"/>
    </isoform>
    <isoform>
        <id>P09038-1</id>
        <name>2</name>
        <sequence type="described" ref="VSP_038236 VSP_038237"/>
    </isoform>
    <isoform>
        <id>P09038-2</id>
        <name>3</name>
        <sequence type="described" ref="VSP_037383"/>
    </isoform>
    <isoform>
        <id>P09038-3</id>
        <name>4</name>
        <sequence type="described" ref="VSP_037384 VSP_037385"/>
    </isoform>
</comment>
<comment type="tissue specificity">
    <text evidence="11 13">Expressed in granulosa and cumulus cells. Expressed in hepatocellular carcinoma cells, but not in non-cancerous liver tissue.</text>
</comment>
<comment type="PTM">
    <text evidence="16">Phosphorylation at Tyr-215 regulates FGF2 unconventional secretion.</text>
</comment>
<comment type="PTM">
    <text>Several N-termini starting at positions 94, 125, 126, 132, 143 and 162 have been identified by direct sequencing.</text>
</comment>
<comment type="miscellaneous">
    <text>This protein binds heparin more strongly than does aFGF.</text>
</comment>
<comment type="miscellaneous">
    <molecule>Isoform 1</molecule>
    <text>Starts at an alternative CUG codon.</text>
</comment>
<comment type="miscellaneous">
    <molecule>Isoform 2</molecule>
    <text evidence="25">Starts at an alternative CUG codon.</text>
</comment>
<comment type="miscellaneous">
    <molecule>Isoform 4</molecule>
    <text evidence="25">Starts at an alternative CUG codon.</text>
</comment>
<comment type="similarity">
    <text evidence="25">Belongs to the heparin-binding growth factors family.</text>
</comment>
<comment type="sequence caution" evidence="25">
    <conflict type="frameshift">
        <sequence resource="EMBL-CDS" id="AAA52448"/>
    </conflict>
</comment>
<comment type="sequence caution" evidence="25">
    <conflict type="frameshift">
        <sequence resource="EMBL-CDS" id="AAB21432"/>
    </conflict>
</comment>
<comment type="sequence caution" evidence="25">
    <conflict type="miscellaneous discrepancy">
        <sequence resource="EMBL-CDS" id="AAB21432"/>
    </conflict>
    <text>Unusual initiator. The initiator methionine is coded by a non-canonical CTG leucine codon.</text>
</comment>
<comment type="sequence caution" evidence="25">
    <conflict type="erroneous initiation">
        <sequence resource="EMBL-CDS" id="ABO43041"/>
    </conflict>
    <text>Truncated N-terminus.</text>
</comment>
<comment type="sequence caution" evidence="25">
    <conflict type="miscellaneous discrepancy">
        <sequence resource="EMBL-CDS" id="ABO43041"/>
    </conflict>
    <text>Unusual initiator. The initiator methionine is coded by a non-canonical CTG leucine codon.</text>
</comment>
<comment type="sequence caution" evidence="25">
    <conflict type="frameshift">
        <sequence resource="EMBL-CDS" id="CAA28027"/>
    </conflict>
</comment>
<comment type="sequence caution" evidence="25">
    <conflict type="miscellaneous discrepancy">
        <sequence resource="EMBL-CDS" id="CAA28027"/>
    </conflict>
    <text>Unusual initiator. The initiator methionine is coded by a non-canonical CTG leucine codon.</text>
</comment>
<comment type="sequence caution" evidence="25">
    <conflict type="frameshift">
        <sequence resource="EMBL-CDS" id="CAA73868"/>
    </conflict>
</comment>
<comment type="sequence caution" evidence="25">
    <conflict type="miscellaneous discrepancy">
        <sequence resource="EMBL-CDS" id="CAA73868"/>
    </conflict>
    <text>Unusual initiator. The initiator methionine is coded by a non-canonical CTG leucine codon.</text>
</comment>
<comment type="sequence caution" evidence="25">
    <conflict type="erroneous initiation">
        <sequence resource="EMBL-CDS" id="EAX05222"/>
    </conflict>
    <text>Truncated N-terminus.</text>
</comment>
<comment type="sequence caution" evidence="25">
    <conflict type="miscellaneous discrepancy">
        <sequence resource="EMBL-CDS" id="EAX05222"/>
    </conflict>
    <text>Unusual initiator. The initiator methionine is coded by a non-canonical CTG leucine codon.</text>
</comment>
<comment type="online information" name="Atlas of Genetics and Cytogenetics in Oncology and Haematology">
    <link uri="https://atlasgeneticsoncology.org/gene/511/FGF2"/>
</comment>
<organism>
    <name type="scientific">Homo sapiens</name>
    <name type="common">Human</name>
    <dbReference type="NCBI Taxonomy" id="9606"/>
    <lineage>
        <taxon>Eukaryota</taxon>
        <taxon>Metazoa</taxon>
        <taxon>Chordata</taxon>
        <taxon>Craniata</taxon>
        <taxon>Vertebrata</taxon>
        <taxon>Euteleostomi</taxon>
        <taxon>Mammalia</taxon>
        <taxon>Eutheria</taxon>
        <taxon>Euarchontoglires</taxon>
        <taxon>Primates</taxon>
        <taxon>Haplorrhini</taxon>
        <taxon>Catarrhini</taxon>
        <taxon>Hominidae</taxon>
        <taxon>Homo</taxon>
    </lineage>
</organism>
<keyword id="KW-0002">3D-structure</keyword>
<keyword id="KW-0024">Alternative initiation</keyword>
<keyword id="KW-0037">Angiogenesis</keyword>
<keyword id="KW-0217">Developmental protein</keyword>
<keyword id="KW-0221">Differentiation</keyword>
<keyword id="KW-0903">Direct protein sequencing</keyword>
<keyword id="KW-0339">Growth factor</keyword>
<keyword id="KW-0358">Heparin-binding</keyword>
<keyword id="KW-1017">Isopeptide bond</keyword>
<keyword id="KW-0488">Methylation</keyword>
<keyword id="KW-0497">Mitogen</keyword>
<keyword id="KW-0539">Nucleus</keyword>
<keyword id="KW-0597">Phosphoprotein</keyword>
<keyword id="KW-1267">Proteomics identification</keyword>
<keyword id="KW-1185">Reference proteome</keyword>
<keyword id="KW-0964">Secreted</keyword>
<keyword id="KW-0832">Ubl conjugation</keyword>